<comment type="function">
    <text evidence="13 22">Precursor of non-enzymatic components of the classical, lectin and GZMK complement pathways, which consist in a cascade of proteins that leads to phagocytosis and breakdown of pathogens and signaling that strengthens the adaptive immune system.</text>
</comment>
<comment type="function">
    <molecule>Complement C4b-B</molecule>
    <text evidence="1 22">Non-enzymatic component of C3 and C5 convertases (By similarity). Generated following cleavage by complement proteases (C1S, MASP2 or GZMK, depending on the complement pathway), it covalently attaches to the surface of pathogens, where it acts as an opsonin that marks the surface of antigens for removal (By similarity). It then recruits the serine protease complement C2b to form the C3 and C5 convertases, which cleave and activate C3 and C5, respectively, the next components of the complement pathways (PubMed:8538770). Complement C4b-B isotype catalyzes the transacylation of the thioester carbonyl group to form ester bonds with carbohydrate antigens, while C4b-A isotype is responsible for effective binding to form amide bonds with immune aggregates or protein antigens (PubMed:8538770).</text>
</comment>
<comment type="function">
    <molecule>C4a anaphylatoxin</molecule>
    <text evidence="1">Putative humoral mediator released following cleavage by complement proteases (C1S, MASP2 or GZMK, depending on the complement pathway). While it is strongly similar to anaphylatoxins, its role is unclear. Was reported to act as a mediator of local inflammatory process; however these effects were probably due to contamination with C3a and/C5a anaphylatoxins in biological assays.</text>
</comment>
<comment type="subunit">
    <text evidence="1">In absence of complement activation, circulates in blood as a disulfide-linked trimer of an alpha, beta and gamma chain.</text>
</comment>
<comment type="subunit">
    <molecule>Complement C4b-B</molecule>
    <text evidence="1 16 21">Complement C4b is composed of complement C4b-A, complement C4 beta and complement C4 gamma chains that are associated via disulfide bonds (By similarity). Non-enzymatic component of the C3 convertase, also named C4bC2b, composed of the serine protease complement C2b (C2), as well as complement C4b (By similarity). Non-enzymatic component of the C5 convertase, also named C4bC2bC3b, composed of the serine protease complement C2b (C2), complement C3b, as well as complement C4b (By similarity). Interacts with CR1 (via Sushi 1 and Sushi 2 domains) (PubMed:2972794, PubMed:8175757).</text>
</comment>
<comment type="subunit">
    <text evidence="15 28">(Microbial infection) Binds B.burgdorferi OspC, the interaction is inhibited by complement factor C2 (PubMed:28873507). This binding may inhibit the complement cascade and allow the bacteria to survive in the host bloodstream (Probable).</text>
</comment>
<comment type="interaction">
    <interactant intactId="EBI-26369106">
        <id>PRO_0000042699</id>
    </interactant>
    <interactant intactId="EBI-7965040">
        <id>O00187</id>
        <label>MASP2</label>
    </interactant>
    <organismsDiffer>false</organismsDiffer>
    <experiments>4</experiments>
</comment>
<comment type="subcellular location">
    <subcellularLocation>
        <location evidence="1">Secreted</location>
    </subcellularLocation>
    <subcellularLocation>
        <location evidence="14">Synapse</location>
    </subcellularLocation>
    <subcellularLocation>
        <location evidence="14">Cell projection</location>
        <location evidence="14">Axon</location>
    </subcellularLocation>
    <subcellularLocation>
        <location evidence="14">Cell projection</location>
        <location evidence="14">Dendrite</location>
    </subcellularLocation>
</comment>
<comment type="subcellular location">
    <molecule>C4a anaphylatoxin</molecule>
    <subcellularLocation>
        <location evidence="1">Secreted</location>
    </subcellularLocation>
</comment>
<comment type="subcellular location">
    <molecule>Complement C4b-B</molecule>
    <subcellularLocation>
        <location evidence="22">Secreted</location>
    </subcellularLocation>
    <subcellularLocation>
        <location evidence="22">Cell surface</location>
    </subcellularLocation>
    <text evidence="22">Covalently associated with the surface of pathogens: the internal thioester bond reacts with carbohydrate antigens on the target surface to form amide or ester bonds.</text>
</comment>
<comment type="tissue specificity">
    <text evidence="6">Complement component C4 is expressed at highest levels in the liver, at moderate levels in the adrenal cortex, adrenal medulla, thyroid gland, and the kidney, and at lowest levels in the heart, ovary, small intestine, thymus, pancreas and spleen. The extra-hepatic sites of expression may be important for the local protection and inflammatory response.</text>
</comment>
<comment type="PTM">
    <text evidence="1">Prior to secretion, the single-chain precursor is enzymatically cleaved by plasminogen (PLG) to yield non-identical chains alpha, beta and gamma (By similarity). During activation of the complement systems, the alpha chain is cleaved into C4a and C4b by different proteases depending on the complement pathway: C4b stays linked to the beta and gamma chains, while C4a is released in the plasma (By similarity). The alpha chain is cleaved by C1S to generate C4a and C4b following activation by the classical complement system (By similarity). The alpha chain is cleaved to generate C4a and C4b by MASP2 following activation by the lectin complement system (By similarity). The alpha chain is cleaved by GZMK to generate C4a and C4b following activation by the GZMK complement system (By similarity). Further degradation of C4b by C1 into the inactive fragments C4c and C4d blocks the generation of C3 convertase (By similarity). The proteolytic cleavages often are incomplete so that many structural forms can be found in plasma (By similarity).</text>
</comment>
<comment type="PTM">
    <molecule>Complement C4b-B</molecule>
    <text evidence="1">Upon activation, the internal thioester bond reacts with carbohydrate antigens on the target surface to form amide or ester bonds, leading to covalent association with the surface of pathogens.</text>
</comment>
<comment type="PTM">
    <molecule>Complement C4b-B</molecule>
    <text evidence="1">Complement C4b interacts with complement C3b via a thioester linkage.</text>
</comment>
<comment type="PTM">
    <text evidence="1">N- and O-glycosylated. O-glycosylated with a core 1 or possibly core 8 glycan.</text>
</comment>
<comment type="polymorphism">
    <text evidence="6 14">The complement component C4 is the most polymorphic protein of the complement system. It is the product of 2 closely linked and highly homologous genes, C4A and C4B. Once polymorphic variation is discounted, the 2 isotypes differ by only 4 amino acids at positions 1120-1125: PCPVLD for C4A and LSPVIH for C4B. The 2 isotypes bear several antigenic determinants defining Chido/Rodgers blood group system [MIM:614374]. Rodgers determinants are generally associated with C4A allotypes, and Chido with C4B. Variations at these loci involve not only nucleotide polymorphisms, but also gene number and gene size. The second copy of C4B gene present in some individuals has been called C4B_2 by the HUGO Gene Nomenclature Committee (HGNC). Some individuals may lack either C4A, or C4B gene. Partial deficiency of C4A or C4B is the most commonly inherited immune deficiency known in humans with a combined frequency over 31% in the normal Caucasian population (PubMed:11367523). Common copy-number variants of C4A and C4B affecting expression of complement component C4 in the brain have been associated with schizophrenia risk (PubMed:26814963).</text>
</comment>
<comment type="disease" evidence="5 12">
    <disease id="DI-02648">
        <name>Systemic lupus erythematosus</name>
        <acronym>SLE</acronym>
        <description>A chronic, relapsing, inflammatory, and often febrile multisystemic disorder of connective tissue, characterized principally by involvement of the skin, joints, kidneys and serosal membranes. It is of unknown etiology, but is thought to represent a failure of the regulatory mechanisms of the autoimmune system. The disease is marked by a wide range of system dysfunctions, an elevated erythrocyte sedimentation rate, and the formation of LE cells in the blood or bone marrow.</description>
        <dbReference type="MIM" id="152700"/>
    </disease>
    <text>Disease susceptibility is associated with variants affecting the gene represented in this entry. Interindividual copy-number variation (CNV) of complement component C4 and associated polymorphisms result in different susceptibilities to SLE. The risk of SLE susceptibility has been shown to be significantly increased among subjects with only two copies of total C4. A high copy number is a protective factor against SLE.</text>
</comment>
<comment type="disease" evidence="17">
    <disease id="DI-03321">
        <name>Complement component 4B deficiency</name>
        <acronym>C4BD</acronym>
        <description>A rare defect of the complement classical pathway associated with the development of autoimmune disorders, mainly systemic lupus with or without associated glomerulonephritis.</description>
        <dbReference type="MIM" id="614379"/>
    </disease>
    <text>The disease is caused by variants affecting the gene represented in this entry.</text>
</comment>
<comment type="sequence caution" evidence="27">
    <conflict type="erroneous gene model prediction">
        <sequence resource="EMBL-CDS" id="AAA99717"/>
    </conflict>
</comment>
<name>CO4B_HUMAN</name>
<sequence>MRLLWGLIWASSFFTLSLQKPRLLLFSPSVVHLGVPLSVGVQLQDVPRGQVVKGSVFLRNPSRNNVPCSPKVDFTLSSERDFALLSLQVPLKDAKSCGLHQLLRGPEVQLVAHSPWLKDSLSRTTNIQGINLLFSSRRGHLFLQTDQPIYNPGQRVRYRVFALDQKMRPSTDTITVMVENSHGLRVRKKEVYMPSSIFQDDFVIPDISEPGTWKISARFSDGLESNSSTQFEVKKYVLPNFEVKITPGKPYILTVPGHLDEMQLDIQARYIYGKPVQGVAYVRFGLLDEDGKKTFFRGLESQTKLVNGQSHISLSKAEFQDALEKLNMGITDLQGLRLYVAAAIIESPGGEMEEAELTSWYFVSSPFSLDLSKTKRHLVPGAPFLLQALVREMSGSPASGIPVKVSATVSSPGSVPEVQDIQQNTDGSGQVSIPIIIPQTISELQLSVSAGSPHPAIARLTVAAPPSGGPGFLSIERPDSRPPRVGDTLNLNLRAVGSGATFSHYYYMILSRGQIVFMNREPKRTLTSVSVFVDHHLAPSFYFVAFYYHGDHPVANSLRVDVQAGACEGKLELSVDGAKQYRNGESVKLHLETDSLALVALGALDTALYAAGSKSHKPLNMGKVFEAMNSYDLGCGPGGGDSALQVFQAAGLAFSDGDQWTLSRKRLSCPKEKTTRKKRNVNFQKAINEKLGQYASPTAKRCCQDGVTRLPMMRSCEQRAARVQQPDCREPFLSCCQFAESLRKKSRDKGQAGLQRALEILQEEDLIDEDDIPVRSFFPENWLWRVETVDRFQILTLWLPDSLTTWEIHGLSLSKTKGLCVATPVQLRVFREFHLHLRLPMSVRRFEQLELRPVLYNYLDKNLTVSVHVSPVEGLCLAGGGGLAQQVLVPAGSARPVAFSVVPTAATAVSLKVVARGSFEFPVGDAVSKVLQIEKEGAIHREELVYELNPLDHRGRTLEIPGNSDPNMIPDGDFNSYVRVTASDPLDTLGSEGALSPGGVASLLRLPRGCGEQTMIYLAPTLAASRYLDKTEQWSTLPPETKDHAVDLIQKGYMRIQQFRKADGSYAAWLSRGSSTWLTAFVLKVLSLAQEQVGGSPEKLQETSNWLLSQQQADGSFQDLSPVIHRSMQGGLVGNDETVALTAFVTIALHHGLAVFQDEGAEPLKQRVEASISKASSFLGEKASAGLLGAHAAAITAYALTLTKAPADLRGVAHNNLMAMAQETGDNLYWGSVTGSQSNAVSPTPAPRNPSDPMPQAPALWIETTAYALLHLLLHEGKAEMADQAAAWLTRQGSFQGGFRSTQDTVIALDALSAYWIASHTTEERGLNVTLSSTGRNGFKSHALQLNNRQIRGLEEELQFSLGSKINVKVGGNSKGTLKVLRTYNVLDMKNTTCQDLQIEVTVKGHVEYTMEANEDYEDYEYDELPAKDDPDAPLQPVTPLQLFEGRRNRRRREAPKVVEEQESRVHYTVCIWRNGKVGLSGMAIADVTLLSGFHALRADLEKLTSLSDRYVSHFETEGPHVLLYFDSVPTSRECVGFEAVQEVPVGLVQPASATLYDYYNPERRCSVFYGAPSKSRLLATLCSAEVCQCAEGKCPRQRRALERGLQDEDGYRMKFACYYPRVEYGFQVKVLREDSRAAFRLFETKITQVLHFTKDVKAAANQMRNFLVRASCRLRLEPGKEYLIMGLDGATYDLEGHPQYLLDSNSWIEEMPSERLCRSTRQRAACAQLNDFLQEYGTQGCQV</sequence>
<accession>P0C0L5</accession>
<accession>A2BHY4</accession>
<accession>P01028</accession>
<accession>P78445</accession>
<accession>Q13160</accession>
<accession>Q13906</accession>
<accession>Q14033</accession>
<accession>Q14835</accession>
<accession>Q6U2E9</accession>
<accession>Q6U2G1</accession>
<accession>Q6U2I5</accession>
<accession>Q6U2L1</accession>
<accession>Q6U2L7</accession>
<accession>Q6U2L9</accession>
<accession>Q6U2M5</accession>
<accession>Q6VCV8</accession>
<accession>Q96SA7</accession>
<accession>Q9NPK5</accession>
<accession>Q9UIP5</accession>
<keyword id="KW-0002">3D-structure</keyword>
<keyword id="KW-0095">Blood group antigen</keyword>
<keyword id="KW-0966">Cell projection</keyword>
<keyword id="KW-0165">Cleavage on pair of basic residues</keyword>
<keyword id="KW-0180">Complement pathway</keyword>
<keyword id="KW-0903">Direct protein sequencing</keyword>
<keyword id="KW-1015">Disulfide bond</keyword>
<keyword id="KW-0325">Glycoprotein</keyword>
<keyword id="KW-0391">Immunity</keyword>
<keyword id="KW-0395">Inflammatory response</keyword>
<keyword id="KW-0399">Innate immunity</keyword>
<keyword id="KW-0597">Phosphoprotein</keyword>
<keyword id="KW-1267">Proteomics identification</keyword>
<keyword id="KW-1185">Reference proteome</keyword>
<keyword id="KW-0964">Secreted</keyword>
<keyword id="KW-0732">Signal</keyword>
<keyword id="KW-0765">Sulfation</keyword>
<keyword id="KW-0770">Synapse</keyword>
<keyword id="KW-0772">Systemic lupus erythematosus</keyword>
<keyword id="KW-0882">Thioester bond</keyword>
<evidence type="ECO:0000250" key="1">
    <source>
        <dbReference type="UniProtKB" id="P0C0L4"/>
    </source>
</evidence>
<evidence type="ECO:0000255" key="2"/>
<evidence type="ECO:0000255" key="3">
    <source>
        <dbReference type="PROSITE-ProRule" id="PRU00022"/>
    </source>
</evidence>
<evidence type="ECO:0000255" key="4">
    <source>
        <dbReference type="PROSITE-ProRule" id="PRU00295"/>
    </source>
</evidence>
<evidence type="ECO:0000269" key="5">
    <source>
    </source>
</evidence>
<evidence type="ECO:0000269" key="6">
    <source>
    </source>
</evidence>
<evidence type="ECO:0000269" key="7">
    <source>
    </source>
</evidence>
<evidence type="ECO:0000269" key="8">
    <source>
    </source>
</evidence>
<evidence type="ECO:0000269" key="9">
    <source>
    </source>
</evidence>
<evidence type="ECO:0000269" key="10">
    <source>
    </source>
</evidence>
<evidence type="ECO:0000269" key="11">
    <source>
    </source>
</evidence>
<evidence type="ECO:0000269" key="12">
    <source>
    </source>
</evidence>
<evidence type="ECO:0000269" key="13">
    <source>
    </source>
</evidence>
<evidence type="ECO:0000269" key="14">
    <source>
    </source>
</evidence>
<evidence type="ECO:0000269" key="15">
    <source>
    </source>
</evidence>
<evidence type="ECO:0000269" key="16">
    <source>
    </source>
</evidence>
<evidence type="ECO:0000269" key="17">
    <source>
    </source>
</evidence>
<evidence type="ECO:0000269" key="18">
    <source>
    </source>
</evidence>
<evidence type="ECO:0000269" key="19">
    <source>
    </source>
</evidence>
<evidence type="ECO:0000269" key="20">
    <source>
    </source>
</evidence>
<evidence type="ECO:0000269" key="21">
    <source>
    </source>
</evidence>
<evidence type="ECO:0000269" key="22">
    <source>
    </source>
</evidence>
<evidence type="ECO:0000269" key="23">
    <source>
    </source>
</evidence>
<evidence type="ECO:0000269" key="24">
    <source ref="2"/>
</evidence>
<evidence type="ECO:0000269" key="25">
    <source ref="3"/>
</evidence>
<evidence type="ECO:0000303" key="26">
    <source>
    </source>
</evidence>
<evidence type="ECO:0000305" key="27"/>
<evidence type="ECO:0000305" key="28">
    <source>
    </source>
</evidence>
<evidence type="ECO:0000312" key="29">
    <source>
        <dbReference type="HGNC" id="HGNC:1324"/>
    </source>
</evidence>
<evidence type="ECO:0007744" key="30">
    <source>
        <dbReference type="PDB" id="6YSQ"/>
    </source>
</evidence>
<evidence type="ECO:0007829" key="31">
    <source>
        <dbReference type="PDB" id="6YSQ"/>
    </source>
</evidence>
<organism>
    <name type="scientific">Homo sapiens</name>
    <name type="common">Human</name>
    <dbReference type="NCBI Taxonomy" id="9606"/>
    <lineage>
        <taxon>Eukaryota</taxon>
        <taxon>Metazoa</taxon>
        <taxon>Chordata</taxon>
        <taxon>Craniata</taxon>
        <taxon>Vertebrata</taxon>
        <taxon>Euteleostomi</taxon>
        <taxon>Mammalia</taxon>
        <taxon>Eutheria</taxon>
        <taxon>Euarchontoglires</taxon>
        <taxon>Primates</taxon>
        <taxon>Haplorrhini</taxon>
        <taxon>Catarrhini</taxon>
        <taxon>Hominidae</taxon>
        <taxon>Homo</taxon>
    </lineage>
</organism>
<proteinExistence type="evidence at protein level"/>
<gene>
    <name evidence="26 29" type="primary">C4B</name>
    <name type="synonym">CO4</name>
    <name type="synonym">CPAMD3</name>
</gene>
<gene>
    <name type="primary">C4B_2</name>
</gene>
<dbReference type="EMBL" id="U24578">
    <property type="protein sequence ID" value="AAA99717.1"/>
    <property type="status" value="ALT_SEQ"/>
    <property type="molecule type" value="Genomic_DNA"/>
</dbReference>
<dbReference type="EMBL" id="AF019413">
    <property type="protein sequence ID" value="AAB67980.1"/>
    <property type="molecule type" value="Genomic_DNA"/>
</dbReference>
<dbReference type="EMBL" id="AY379860">
    <property type="protein sequence ID" value="AAR89087.1"/>
    <property type="molecule type" value="Genomic_DNA"/>
</dbReference>
<dbReference type="EMBL" id="AY379862">
    <property type="protein sequence ID" value="AAR89089.1"/>
    <property type="molecule type" value="Genomic_DNA"/>
</dbReference>
<dbReference type="EMBL" id="AY379864">
    <property type="protein sequence ID" value="AAR89091.1"/>
    <property type="molecule type" value="Genomic_DNA"/>
</dbReference>
<dbReference type="EMBL" id="AY379866">
    <property type="protein sequence ID" value="AAR89093.1"/>
    <property type="molecule type" value="Genomic_DNA"/>
</dbReference>
<dbReference type="EMBL" id="AY379868">
    <property type="protein sequence ID" value="AAR89095.1"/>
    <property type="molecule type" value="Genomic_DNA"/>
</dbReference>
<dbReference type="EMBL" id="AY379870">
    <property type="protein sequence ID" value="AAR89097.1"/>
    <property type="molecule type" value="Genomic_DNA"/>
</dbReference>
<dbReference type="EMBL" id="AY379872">
    <property type="protein sequence ID" value="AAR89099.1"/>
    <property type="molecule type" value="Genomic_DNA"/>
</dbReference>
<dbReference type="EMBL" id="AY379874">
    <property type="protein sequence ID" value="AAR89101.1"/>
    <property type="molecule type" value="Genomic_DNA"/>
</dbReference>
<dbReference type="EMBL" id="AY379876">
    <property type="protein sequence ID" value="AAR89103.1"/>
    <property type="molecule type" value="Genomic_DNA"/>
</dbReference>
<dbReference type="EMBL" id="AY379878">
    <property type="protein sequence ID" value="AAR89105.1"/>
    <property type="molecule type" value="Genomic_DNA"/>
</dbReference>
<dbReference type="EMBL" id="AY379880">
    <property type="protein sequence ID" value="AAR89107.1"/>
    <property type="molecule type" value="Genomic_DNA"/>
</dbReference>
<dbReference type="EMBL" id="AY379882">
    <property type="protein sequence ID" value="AAR89109.1"/>
    <property type="molecule type" value="Genomic_DNA"/>
</dbReference>
<dbReference type="EMBL" id="AY379884">
    <property type="protein sequence ID" value="AAR89111.1"/>
    <property type="molecule type" value="Genomic_DNA"/>
</dbReference>
<dbReference type="EMBL" id="AY379886">
    <property type="protein sequence ID" value="AAR89113.1"/>
    <property type="molecule type" value="Genomic_DNA"/>
</dbReference>
<dbReference type="EMBL" id="AY379888">
    <property type="protein sequence ID" value="AAR89115.1"/>
    <property type="molecule type" value="Genomic_DNA"/>
</dbReference>
<dbReference type="EMBL" id="AY379890">
    <property type="protein sequence ID" value="AAR89117.1"/>
    <property type="molecule type" value="Genomic_DNA"/>
</dbReference>
<dbReference type="EMBL" id="AY379892">
    <property type="protein sequence ID" value="AAR89119.1"/>
    <property type="molecule type" value="Genomic_DNA"/>
</dbReference>
<dbReference type="EMBL" id="AY379894">
    <property type="protein sequence ID" value="AAR89121.1"/>
    <property type="molecule type" value="Genomic_DNA"/>
</dbReference>
<dbReference type="EMBL" id="AY379896">
    <property type="protein sequence ID" value="AAR89123.1"/>
    <property type="molecule type" value="Genomic_DNA"/>
</dbReference>
<dbReference type="EMBL" id="AY379898">
    <property type="protein sequence ID" value="AAR89125.1"/>
    <property type="molecule type" value="Genomic_DNA"/>
</dbReference>
<dbReference type="EMBL" id="AY379900">
    <property type="protein sequence ID" value="AAR89127.1"/>
    <property type="molecule type" value="Genomic_DNA"/>
</dbReference>
<dbReference type="EMBL" id="AY379902">
    <property type="protein sequence ID" value="AAR89130.1"/>
    <property type="molecule type" value="Genomic_DNA"/>
</dbReference>
<dbReference type="EMBL" id="AY379904">
    <property type="protein sequence ID" value="AAR89132.1"/>
    <property type="molecule type" value="Genomic_DNA"/>
</dbReference>
<dbReference type="EMBL" id="AY379906">
    <property type="protein sequence ID" value="AAR89134.1"/>
    <property type="molecule type" value="Genomic_DNA"/>
</dbReference>
<dbReference type="EMBL" id="AY379908">
    <property type="protein sequence ID" value="AAR89136.1"/>
    <property type="molecule type" value="Genomic_DNA"/>
</dbReference>
<dbReference type="EMBL" id="AY379910">
    <property type="protein sequence ID" value="AAR89138.1"/>
    <property type="molecule type" value="Genomic_DNA"/>
</dbReference>
<dbReference type="EMBL" id="AY379912">
    <property type="protein sequence ID" value="AAR89139.1"/>
    <property type="molecule type" value="Genomic_DNA"/>
</dbReference>
<dbReference type="EMBL" id="AY379914">
    <property type="protein sequence ID" value="AAR89142.1"/>
    <property type="molecule type" value="Genomic_DNA"/>
</dbReference>
<dbReference type="EMBL" id="AY379916">
    <property type="protein sequence ID" value="AAR89144.1"/>
    <property type="molecule type" value="Genomic_DNA"/>
</dbReference>
<dbReference type="EMBL" id="AY379918">
    <property type="protein sequence ID" value="AAR89145.1"/>
    <property type="molecule type" value="Genomic_DNA"/>
</dbReference>
<dbReference type="EMBL" id="AY379920">
    <property type="protein sequence ID" value="AAR89148.1"/>
    <property type="molecule type" value="Genomic_DNA"/>
</dbReference>
<dbReference type="EMBL" id="AY379922">
    <property type="protein sequence ID" value="AAR89150.1"/>
    <property type="molecule type" value="Genomic_DNA"/>
</dbReference>
<dbReference type="EMBL" id="AY379924">
    <property type="protein sequence ID" value="AAR89151.1"/>
    <property type="molecule type" value="Genomic_DNA"/>
</dbReference>
<dbReference type="EMBL" id="AY379959">
    <property type="protein sequence ID" value="AAR89163.1"/>
    <property type="molecule type" value="Genomic_DNA"/>
</dbReference>
<dbReference type="EMBL" id="AY379936">
    <property type="protein sequence ID" value="AAR89163.1"/>
    <property type="status" value="JOINED"/>
    <property type="molecule type" value="Genomic_DNA"/>
</dbReference>
<dbReference type="EMBL" id="AY379937">
    <property type="protein sequence ID" value="AAR89163.1"/>
    <property type="status" value="JOINED"/>
    <property type="molecule type" value="Genomic_DNA"/>
</dbReference>
<dbReference type="EMBL" id="AY379938">
    <property type="protein sequence ID" value="AAR89163.1"/>
    <property type="status" value="JOINED"/>
    <property type="molecule type" value="Genomic_DNA"/>
</dbReference>
<dbReference type="EMBL" id="AY379939">
    <property type="protein sequence ID" value="AAR89163.1"/>
    <property type="status" value="JOINED"/>
    <property type="molecule type" value="Genomic_DNA"/>
</dbReference>
<dbReference type="EMBL" id="AY379940">
    <property type="protein sequence ID" value="AAR89163.1"/>
    <property type="status" value="JOINED"/>
    <property type="molecule type" value="Genomic_DNA"/>
</dbReference>
<dbReference type="EMBL" id="AY379941">
    <property type="protein sequence ID" value="AAR89163.1"/>
    <property type="status" value="JOINED"/>
    <property type="molecule type" value="Genomic_DNA"/>
</dbReference>
<dbReference type="EMBL" id="AY379942">
    <property type="protein sequence ID" value="AAR89163.1"/>
    <property type="status" value="JOINED"/>
    <property type="molecule type" value="Genomic_DNA"/>
</dbReference>
<dbReference type="EMBL" id="AY379943">
    <property type="protein sequence ID" value="AAR89163.1"/>
    <property type="status" value="JOINED"/>
    <property type="molecule type" value="Genomic_DNA"/>
</dbReference>
<dbReference type="EMBL" id="AY379944">
    <property type="protein sequence ID" value="AAR89163.1"/>
    <property type="status" value="JOINED"/>
    <property type="molecule type" value="Genomic_DNA"/>
</dbReference>
<dbReference type="EMBL" id="AY379945">
    <property type="protein sequence ID" value="AAR89163.1"/>
    <property type="status" value="JOINED"/>
    <property type="molecule type" value="Genomic_DNA"/>
</dbReference>
<dbReference type="EMBL" id="AY379946">
    <property type="protein sequence ID" value="AAR89163.1"/>
    <property type="status" value="JOINED"/>
    <property type="molecule type" value="Genomic_DNA"/>
</dbReference>
<dbReference type="EMBL" id="AY379947">
    <property type="protein sequence ID" value="AAR89163.1"/>
    <property type="status" value="JOINED"/>
    <property type="molecule type" value="Genomic_DNA"/>
</dbReference>
<dbReference type="EMBL" id="AY379948">
    <property type="protein sequence ID" value="AAR89163.1"/>
    <property type="status" value="JOINED"/>
    <property type="molecule type" value="Genomic_DNA"/>
</dbReference>
<dbReference type="EMBL" id="AY379949">
    <property type="protein sequence ID" value="AAR89163.1"/>
    <property type="status" value="JOINED"/>
    <property type="molecule type" value="Genomic_DNA"/>
</dbReference>
<dbReference type="EMBL" id="AY379950">
    <property type="protein sequence ID" value="AAR89163.1"/>
    <property type="status" value="JOINED"/>
    <property type="molecule type" value="Genomic_DNA"/>
</dbReference>
<dbReference type="EMBL" id="AY379951">
    <property type="protein sequence ID" value="AAR89163.1"/>
    <property type="status" value="JOINED"/>
    <property type="molecule type" value="Genomic_DNA"/>
</dbReference>
<dbReference type="EMBL" id="AY379952">
    <property type="protein sequence ID" value="AAR89163.1"/>
    <property type="status" value="JOINED"/>
    <property type="molecule type" value="Genomic_DNA"/>
</dbReference>
<dbReference type="EMBL" id="AY379953">
    <property type="protein sequence ID" value="AAR89163.1"/>
    <property type="status" value="JOINED"/>
    <property type="molecule type" value="Genomic_DNA"/>
</dbReference>
<dbReference type="EMBL" id="AY379954">
    <property type="protein sequence ID" value="AAR89163.1"/>
    <property type="status" value="JOINED"/>
    <property type="molecule type" value="Genomic_DNA"/>
</dbReference>
<dbReference type="EMBL" id="AY379955">
    <property type="protein sequence ID" value="AAR89163.1"/>
    <property type="status" value="JOINED"/>
    <property type="molecule type" value="Genomic_DNA"/>
</dbReference>
<dbReference type="EMBL" id="AY379956">
    <property type="protein sequence ID" value="AAR89163.1"/>
    <property type="status" value="JOINED"/>
    <property type="molecule type" value="Genomic_DNA"/>
</dbReference>
<dbReference type="EMBL" id="AY379957">
    <property type="protein sequence ID" value="AAR89163.1"/>
    <property type="status" value="JOINED"/>
    <property type="molecule type" value="Genomic_DNA"/>
</dbReference>
<dbReference type="EMBL" id="AY379958">
    <property type="protein sequence ID" value="AAR89163.1"/>
    <property type="status" value="JOINED"/>
    <property type="molecule type" value="Genomic_DNA"/>
</dbReference>
<dbReference type="EMBL" id="AL049547">
    <property type="protein sequence ID" value="CAB89302.1"/>
    <property type="molecule type" value="Genomic_DNA"/>
</dbReference>
<dbReference type="EMBL" id="BX679671">
    <property type="status" value="NOT_ANNOTATED_CDS"/>
    <property type="molecule type" value="Genomic_DNA"/>
</dbReference>
<dbReference type="EMBL" id="K02404">
    <property type="protein sequence ID" value="AAA59651.1"/>
    <property type="molecule type" value="mRNA"/>
</dbReference>
<dbReference type="EMBL" id="U77887">
    <property type="protein sequence ID" value="AAK49811.1"/>
    <property type="molecule type" value="Genomic_DNA"/>
</dbReference>
<dbReference type="EMBL" id="AY343497">
    <property type="protein sequence ID" value="AAQ99144.1"/>
    <property type="molecule type" value="Genomic_DNA"/>
</dbReference>
<dbReference type="CCDS" id="CCDS47405.1"/>
<dbReference type="PIR" id="B20807">
    <property type="entry name" value="B20807"/>
</dbReference>
<dbReference type="RefSeq" id="NP_001002029.3">
    <property type="nucleotide sequence ID" value="NM_001002029.4"/>
</dbReference>
<dbReference type="RefSeq" id="NP_001229752.1">
    <property type="nucleotide sequence ID" value="NM_001242823.2"/>
</dbReference>
<dbReference type="PDB" id="6YSQ">
    <property type="method" value="X-ray"/>
    <property type="resolution" value="3.30 A"/>
    <property type="chains" value="A/B=1-1744"/>
</dbReference>
<dbReference type="PDBsum" id="6YSQ"/>
<dbReference type="SMR" id="P0C0L5"/>
<dbReference type="BioGRID" id="107182">
    <property type="interactions" value="15"/>
</dbReference>
<dbReference type="BioGRID" id="945184">
    <property type="interactions" value="2"/>
</dbReference>
<dbReference type="ComplexPortal" id="CPX-6156">
    <property type="entry name" value="Classical and lectin pathway C3 convertase complex C4b2a-B"/>
</dbReference>
<dbReference type="DIP" id="DIP-47260N"/>
<dbReference type="FunCoup" id="P0C0L5">
    <property type="interactions" value="248"/>
</dbReference>
<dbReference type="IntAct" id="P0C0L5">
    <property type="interactions" value="26"/>
</dbReference>
<dbReference type="MINT" id="P0C0L5"/>
<dbReference type="STRING" id="9606.ENSP00000415941"/>
<dbReference type="DrugBank" id="DB09130">
    <property type="generic name" value="Copper"/>
</dbReference>
<dbReference type="DrugBank" id="DB00028">
    <property type="generic name" value="Human immunoglobulin G"/>
</dbReference>
<dbReference type="DrugBank" id="DB01593">
    <property type="generic name" value="Zinc"/>
</dbReference>
<dbReference type="DrugBank" id="DB14487">
    <property type="generic name" value="Zinc acetate"/>
</dbReference>
<dbReference type="DrugBank" id="DB14533">
    <property type="generic name" value="Zinc chloride"/>
</dbReference>
<dbReference type="DrugBank" id="DB14548">
    <property type="generic name" value="Zinc sulfate, unspecified form"/>
</dbReference>
<dbReference type="MEROPS" id="I39.951"/>
<dbReference type="GlyConnect" id="1146">
    <property type="glycosylation" value="32 N-Linked glycans (4 sites), 1 O-Linked glycan (1 site)"/>
</dbReference>
<dbReference type="GlyCosmos" id="P0C0L5">
    <property type="glycosylation" value="5 sites, 36 glycans"/>
</dbReference>
<dbReference type="GlyGen" id="P0C0L5">
    <property type="glycosylation" value="10 sites, 37 N-linked glycans (4 sites), 3 O-linked glycans (4 sites)"/>
</dbReference>
<dbReference type="iPTMnet" id="P0C0L5"/>
<dbReference type="PhosphoSitePlus" id="P0C0L5"/>
<dbReference type="BioMuta" id="C4B"/>
<dbReference type="DMDM" id="476007828"/>
<dbReference type="CPTAC" id="non-CPTAC-1107"/>
<dbReference type="jPOST" id="P0C0L5"/>
<dbReference type="MassIVE" id="P0C0L5"/>
<dbReference type="PaxDb" id="9606-ENSP00000415941"/>
<dbReference type="PeptideAtlas" id="P0C0L5"/>
<dbReference type="PRIDE" id="P0C0L5"/>
<dbReference type="ProteomicsDB" id="67395"/>
<dbReference type="Pumba" id="P0C0L5"/>
<dbReference type="TopDownProteomics" id="P0C0L5"/>
<dbReference type="Antibodypedia" id="35326">
    <property type="antibodies" value="380 antibodies from 22 providers"/>
</dbReference>
<dbReference type="DNASU" id="721"/>
<dbReference type="Ensembl" id="ENST00000375177.9">
    <property type="protein sequence ID" value="ENSP00000364321.5"/>
    <property type="gene ID" value="ENSG00000228454.7"/>
</dbReference>
<dbReference type="Ensembl" id="ENST00000411583.6">
    <property type="protein sequence ID" value="ENSP00000407942.2"/>
    <property type="gene ID" value="ENSG00000228267.8"/>
</dbReference>
<dbReference type="Ensembl" id="ENST00000435363.7">
    <property type="protein sequence ID" value="ENSP00000415941.2"/>
    <property type="gene ID" value="ENSG00000224389.9"/>
</dbReference>
<dbReference type="Ensembl" id="ENST00000435500.7">
    <property type="protein sequence ID" value="ENSP00000412786.2"/>
    <property type="gene ID" value="ENSG00000233312.9"/>
</dbReference>
<dbReference type="Ensembl" id="ENST00000449788.6">
    <property type="protein sequence ID" value="ENSP00000414200.2"/>
    <property type="gene ID" value="ENSG00000236625.8"/>
</dbReference>
<dbReference type="GeneID" id="100293534"/>
<dbReference type="GeneID" id="721"/>
<dbReference type="KEGG" id="hsa:100293534"/>
<dbReference type="KEGG" id="hsa:721"/>
<dbReference type="MANE-Select" id="ENST00000435363.7">
    <property type="protein sequence ID" value="ENSP00000415941.2"/>
    <property type="RefSeq nucleotide sequence ID" value="NM_001002029.4"/>
    <property type="RefSeq protein sequence ID" value="NP_001002029.3"/>
</dbReference>
<dbReference type="MANE-Select" id="ENST00000435500.7">
    <property type="protein sequence ID" value="ENSP00000412786.2"/>
    <property type="RefSeq nucleotide sequence ID" value="NM_001242823.2"/>
    <property type="RefSeq protein sequence ID" value="NP_001229752.1"/>
</dbReference>
<dbReference type="UCSC" id="uc011dpd.3">
    <property type="organism name" value="human"/>
</dbReference>
<dbReference type="AGR" id="HGNC:1324"/>
<dbReference type="AGR" id="HGNC:42398"/>
<dbReference type="CTD" id="100293534"/>
<dbReference type="CTD" id="721"/>
<dbReference type="DisGeNET" id="100293534"/>
<dbReference type="DisGeNET" id="721"/>
<dbReference type="GeneCards" id="C4B"/>
<dbReference type="GeneCards" id="C4B_2"/>
<dbReference type="HGNC" id="HGNC:1324">
    <property type="gene designation" value="C4B"/>
</dbReference>
<dbReference type="HGNC" id="HGNC:42398">
    <property type="gene designation" value="C4B_2"/>
</dbReference>
<dbReference type="HPA" id="ENSG00000224389">
    <property type="expression patterns" value="Group enriched (adrenal gland, liver)"/>
</dbReference>
<dbReference type="MalaCards" id="C4B"/>
<dbReference type="MIM" id="120820">
    <property type="type" value="gene"/>
</dbReference>
<dbReference type="MIM" id="152700">
    <property type="type" value="phenotype"/>
</dbReference>
<dbReference type="MIM" id="614374">
    <property type="type" value="phenotype"/>
</dbReference>
<dbReference type="MIM" id="614379">
    <property type="type" value="phenotype"/>
</dbReference>
<dbReference type="neXtProt" id="NX_P0C0L5"/>
<dbReference type="OpenTargets" id="ENSG00000224389"/>
<dbReference type="Orphanet" id="169147">
    <property type="disease" value="Immunodeficiency due to a classical component pathway complement deficiency"/>
</dbReference>
<dbReference type="Orphanet" id="536">
    <property type="disease" value="Systemic lupus erythematosus"/>
</dbReference>
<dbReference type="PharmGKB" id="PA25904"/>
<dbReference type="VEuPathDB" id="HostDB:ENSG00000224389"/>
<dbReference type="eggNOG" id="KOG1366">
    <property type="taxonomic scope" value="Eukaryota"/>
</dbReference>
<dbReference type="GeneTree" id="ENSGT00940000155739"/>
<dbReference type="InParanoid" id="P0C0L5"/>
<dbReference type="OMA" id="AANWLTH"/>
<dbReference type="OrthoDB" id="6359008at2759"/>
<dbReference type="PAN-GO" id="P0C0L5">
    <property type="GO annotations" value="2 GO annotations based on evolutionary models"/>
</dbReference>
<dbReference type="PhylomeDB" id="P0C0L5"/>
<dbReference type="TreeFam" id="TF313285"/>
<dbReference type="PathwayCommons" id="P0C0L5"/>
<dbReference type="Reactome" id="R-HSA-166663">
    <property type="pathway name" value="Initial triggering of complement"/>
</dbReference>
<dbReference type="Reactome" id="R-HSA-174577">
    <property type="pathway name" value="Activation of C3 and C5"/>
</dbReference>
<dbReference type="Reactome" id="R-HSA-977606">
    <property type="pathway name" value="Regulation of Complement cascade"/>
</dbReference>
<dbReference type="SABIO-RK" id="P0C0L5"/>
<dbReference type="SignaLink" id="P0C0L5"/>
<dbReference type="SIGNOR" id="P0C0L5"/>
<dbReference type="BioGRID-ORCS" id="100293534">
    <property type="hits" value="6 hits in 78 CRISPR screens"/>
</dbReference>
<dbReference type="BioGRID-ORCS" id="721">
    <property type="hits" value="9 hits in 741 CRISPR screens"/>
</dbReference>
<dbReference type="ChiTaRS" id="C4B">
    <property type="organism name" value="human"/>
</dbReference>
<dbReference type="GeneWiki" id="Complement_component_4B"/>
<dbReference type="Pharos" id="P0C0L5">
    <property type="development level" value="Tbio"/>
</dbReference>
<dbReference type="PRO" id="PR:P0C0L5"/>
<dbReference type="Proteomes" id="UP000005640">
    <property type="component" value="Chromosome 6"/>
</dbReference>
<dbReference type="RNAct" id="P0C0L5">
    <property type="molecule type" value="protein"/>
</dbReference>
<dbReference type="Bgee" id="ENSG00000224389">
    <property type="expression patterns" value="Expressed in right lobe of liver and 93 other cell types or tissues"/>
</dbReference>
<dbReference type="ExpressionAtlas" id="P0C0L5">
    <property type="expression patterns" value="baseline and differential"/>
</dbReference>
<dbReference type="GO" id="GO:0030424">
    <property type="term" value="C:axon"/>
    <property type="evidence" value="ECO:0007669"/>
    <property type="project" value="UniProtKB-SubCell"/>
</dbReference>
<dbReference type="GO" id="GO:0072562">
    <property type="term" value="C:blood microparticle"/>
    <property type="evidence" value="ECO:0007005"/>
    <property type="project" value="UniProtKB"/>
</dbReference>
<dbReference type="GO" id="GO:0030425">
    <property type="term" value="C:dendrite"/>
    <property type="evidence" value="ECO:0007669"/>
    <property type="project" value="UniProtKB-SubCell"/>
</dbReference>
<dbReference type="GO" id="GO:0070062">
    <property type="term" value="C:extracellular exosome"/>
    <property type="evidence" value="ECO:0007005"/>
    <property type="project" value="UniProtKB"/>
</dbReference>
<dbReference type="GO" id="GO:0005576">
    <property type="term" value="C:extracellular region"/>
    <property type="evidence" value="ECO:0000304"/>
    <property type="project" value="Reactome"/>
</dbReference>
<dbReference type="GO" id="GO:0005615">
    <property type="term" value="C:extracellular space"/>
    <property type="evidence" value="ECO:0000314"/>
    <property type="project" value="BHF-UCL"/>
</dbReference>
<dbReference type="GO" id="GO:0005886">
    <property type="term" value="C:plasma membrane"/>
    <property type="evidence" value="ECO:0000304"/>
    <property type="project" value="Reactome"/>
</dbReference>
<dbReference type="GO" id="GO:0106139">
    <property type="term" value="C:symbiont cell surface"/>
    <property type="evidence" value="ECO:0000314"/>
    <property type="project" value="BHF-UCL"/>
</dbReference>
<dbReference type="GO" id="GO:0045202">
    <property type="term" value="C:synapse"/>
    <property type="evidence" value="ECO:0007669"/>
    <property type="project" value="UniProtKB-SubCell"/>
</dbReference>
<dbReference type="GO" id="GO:0030246">
    <property type="term" value="F:carbohydrate binding"/>
    <property type="evidence" value="ECO:0000314"/>
    <property type="project" value="BHF-UCL"/>
</dbReference>
<dbReference type="GO" id="GO:0001848">
    <property type="term" value="F:complement binding"/>
    <property type="evidence" value="ECO:0000314"/>
    <property type="project" value="BHF-UCL"/>
</dbReference>
<dbReference type="GO" id="GO:0004866">
    <property type="term" value="F:endopeptidase inhibitor activity"/>
    <property type="evidence" value="ECO:0007669"/>
    <property type="project" value="InterPro"/>
</dbReference>
<dbReference type="GO" id="GO:0006956">
    <property type="term" value="P:complement activation"/>
    <property type="evidence" value="ECO:0000316"/>
    <property type="project" value="BHF-UCL"/>
</dbReference>
<dbReference type="GO" id="GO:0006958">
    <property type="term" value="P:complement activation, classical pathway"/>
    <property type="evidence" value="ECO:0007669"/>
    <property type="project" value="UniProtKB-KW"/>
</dbReference>
<dbReference type="GO" id="GO:0032490">
    <property type="term" value="P:detection of molecule of bacterial origin"/>
    <property type="evidence" value="ECO:0000314"/>
    <property type="project" value="BHF-UCL"/>
</dbReference>
<dbReference type="GO" id="GO:0006954">
    <property type="term" value="P:inflammatory response"/>
    <property type="evidence" value="ECO:0007669"/>
    <property type="project" value="UniProtKB-KW"/>
</dbReference>
<dbReference type="GO" id="GO:0045087">
    <property type="term" value="P:innate immune response"/>
    <property type="evidence" value="ECO:0007669"/>
    <property type="project" value="UniProtKB-KW"/>
</dbReference>
<dbReference type="GO" id="GO:0008228">
    <property type="term" value="P:opsonization"/>
    <property type="evidence" value="ECO:0000304"/>
    <property type="project" value="BHF-UCL"/>
</dbReference>
<dbReference type="GO" id="GO:2000427">
    <property type="term" value="P:positive regulation of apoptotic cell clearance"/>
    <property type="evidence" value="ECO:0000316"/>
    <property type="project" value="BHF-UCL"/>
</dbReference>
<dbReference type="CDD" id="cd00017">
    <property type="entry name" value="ANATO"/>
    <property type="match status" value="1"/>
</dbReference>
<dbReference type="CDD" id="cd02896">
    <property type="entry name" value="complement_C3_C4_C5"/>
    <property type="match status" value="1"/>
</dbReference>
<dbReference type="CDD" id="cd03584">
    <property type="entry name" value="NTR_complement_C4"/>
    <property type="match status" value="1"/>
</dbReference>
<dbReference type="FunFam" id="2.60.40.10:FF:000155">
    <property type="entry name" value="complement C3 isoform X1"/>
    <property type="match status" value="1"/>
</dbReference>
<dbReference type="FunFam" id="2.60.40.690:FF:000002">
    <property type="entry name" value="Complement C4 isoform-A"/>
    <property type="match status" value="1"/>
</dbReference>
<dbReference type="FunFam" id="1.20.91.20:FF:000002">
    <property type="entry name" value="Complement C4-A"/>
    <property type="match status" value="1"/>
</dbReference>
<dbReference type="FunFam" id="1.20.91.20:FF:000003">
    <property type="entry name" value="Complement C4-A"/>
    <property type="match status" value="1"/>
</dbReference>
<dbReference type="FunFam" id="1.50.10.20:FF:000010">
    <property type="entry name" value="Complement C4-A"/>
    <property type="match status" value="1"/>
</dbReference>
<dbReference type="FunFam" id="2.20.130.20:FF:000002">
    <property type="entry name" value="Complement C4-A"/>
    <property type="match status" value="1"/>
</dbReference>
<dbReference type="FunFam" id="2.40.50.120:FF:000009">
    <property type="entry name" value="Complement C4-A"/>
    <property type="match status" value="1"/>
</dbReference>
<dbReference type="FunFam" id="2.60.120.1540:FF:000001">
    <property type="entry name" value="Complement C4-A"/>
    <property type="match status" value="1"/>
</dbReference>
<dbReference type="FunFam" id="2.60.40.10:FF:000803">
    <property type="entry name" value="Complement C4-A"/>
    <property type="match status" value="1"/>
</dbReference>
<dbReference type="FunFam" id="2.60.40.1930:FF:000004">
    <property type="entry name" value="Complement C4-A"/>
    <property type="match status" value="1"/>
</dbReference>
<dbReference type="FunFam" id="2.60.40.1930:FF:000007">
    <property type="entry name" value="Complement C4-A"/>
    <property type="match status" value="1"/>
</dbReference>
<dbReference type="FunFam" id="2.60.40.1930:FF:000005">
    <property type="entry name" value="complement C4-A isoform X3"/>
    <property type="match status" value="1"/>
</dbReference>
<dbReference type="FunFam" id="6.20.50.160:FF:000001">
    <property type="entry name" value="Complement component 4"/>
    <property type="match status" value="1"/>
</dbReference>
<dbReference type="FunFam" id="2.60.40.1940:FF:000001">
    <property type="entry name" value="Complement component C3"/>
    <property type="match status" value="1"/>
</dbReference>
<dbReference type="FunFam" id="2.60.120.1540:FF:000006">
    <property type="entry name" value="MHC-linked complement C4"/>
    <property type="match status" value="1"/>
</dbReference>
<dbReference type="Gene3D" id="1.50.10.20">
    <property type="match status" value="1"/>
</dbReference>
<dbReference type="Gene3D" id="2.20.130.20">
    <property type="match status" value="1"/>
</dbReference>
<dbReference type="Gene3D" id="2.40.50.120">
    <property type="match status" value="1"/>
</dbReference>
<dbReference type="Gene3D" id="2.60.120.1540">
    <property type="match status" value="1"/>
</dbReference>
<dbReference type="Gene3D" id="2.60.40.1930">
    <property type="match status" value="3"/>
</dbReference>
<dbReference type="Gene3D" id="2.60.40.1940">
    <property type="match status" value="1"/>
</dbReference>
<dbReference type="Gene3D" id="6.20.50.160">
    <property type="match status" value="1"/>
</dbReference>
<dbReference type="Gene3D" id="2.60.40.690">
    <property type="entry name" value="Alpha-macroglobulin, receptor-binding domain"/>
    <property type="match status" value="1"/>
</dbReference>
<dbReference type="Gene3D" id="1.20.91.20">
    <property type="entry name" value="Anaphylotoxins (complement system)"/>
    <property type="match status" value="2"/>
</dbReference>
<dbReference type="Gene3D" id="2.60.40.10">
    <property type="entry name" value="Immunoglobulins"/>
    <property type="match status" value="2"/>
</dbReference>
<dbReference type="InterPro" id="IPR009048">
    <property type="entry name" value="A-macroglobulin_rcpt-bd"/>
</dbReference>
<dbReference type="InterPro" id="IPR036595">
    <property type="entry name" value="A-macroglobulin_rcpt-bd_sf"/>
</dbReference>
<dbReference type="InterPro" id="IPR050473">
    <property type="entry name" value="A2M/Complement_sys"/>
</dbReference>
<dbReference type="InterPro" id="IPR011625">
    <property type="entry name" value="A2M_N_BRD"/>
</dbReference>
<dbReference type="InterPro" id="IPR047565">
    <property type="entry name" value="Alpha-macroglob_thiol-ester_cl"/>
</dbReference>
<dbReference type="InterPro" id="IPR011626">
    <property type="entry name" value="Alpha-macroglobulin_TED"/>
</dbReference>
<dbReference type="InterPro" id="IPR000020">
    <property type="entry name" value="Anaphylatoxin/fibulin"/>
</dbReference>
<dbReference type="InterPro" id="IPR018081">
    <property type="entry name" value="Anaphylatoxin_comp_syst"/>
</dbReference>
<dbReference type="InterPro" id="IPR001840">
    <property type="entry name" value="Anaphylatoxn_comp_syst_dom"/>
</dbReference>
<dbReference type="InterPro" id="IPR048847">
    <property type="entry name" value="C4_MG1"/>
</dbReference>
<dbReference type="InterPro" id="IPR054587">
    <property type="entry name" value="CO4A-B_CUB_C"/>
</dbReference>
<dbReference type="InterPro" id="IPR013783">
    <property type="entry name" value="Ig-like_fold"/>
</dbReference>
<dbReference type="InterPro" id="IPR001599">
    <property type="entry name" value="Macroglobln_a2"/>
</dbReference>
<dbReference type="InterPro" id="IPR019742">
    <property type="entry name" value="MacrogloblnA2_CS"/>
</dbReference>
<dbReference type="InterPro" id="IPR002890">
    <property type="entry name" value="MG2"/>
</dbReference>
<dbReference type="InterPro" id="IPR041555">
    <property type="entry name" value="MG3"/>
</dbReference>
<dbReference type="InterPro" id="IPR040839">
    <property type="entry name" value="MG4"/>
</dbReference>
<dbReference type="InterPro" id="IPR001134">
    <property type="entry name" value="Netrin_domain"/>
</dbReference>
<dbReference type="InterPro" id="IPR018933">
    <property type="entry name" value="Netrin_module_non-TIMP"/>
</dbReference>
<dbReference type="InterPro" id="IPR008930">
    <property type="entry name" value="Terpenoid_cyclase/PrenylTrfase"/>
</dbReference>
<dbReference type="InterPro" id="IPR008993">
    <property type="entry name" value="TIMP-like_OB-fold"/>
</dbReference>
<dbReference type="PANTHER" id="PTHR11412:SF86">
    <property type="entry name" value="COMPLEMENT C4-A-RELATED"/>
    <property type="match status" value="1"/>
</dbReference>
<dbReference type="PANTHER" id="PTHR11412">
    <property type="entry name" value="MACROGLOBULIN / COMPLEMENT"/>
    <property type="match status" value="1"/>
</dbReference>
<dbReference type="Pfam" id="PF00207">
    <property type="entry name" value="A2M"/>
    <property type="match status" value="1"/>
</dbReference>
<dbReference type="Pfam" id="PF07703">
    <property type="entry name" value="A2M_BRD"/>
    <property type="match status" value="1"/>
</dbReference>
<dbReference type="Pfam" id="PF07677">
    <property type="entry name" value="A2M_recep"/>
    <property type="match status" value="1"/>
</dbReference>
<dbReference type="Pfam" id="PF01821">
    <property type="entry name" value="ANATO"/>
    <property type="match status" value="1"/>
</dbReference>
<dbReference type="Pfam" id="PF21145">
    <property type="entry name" value="C4_MG1"/>
    <property type="match status" value="1"/>
</dbReference>
<dbReference type="Pfam" id="PF22661">
    <property type="entry name" value="CO4A-B_CUB_C"/>
    <property type="match status" value="1"/>
</dbReference>
<dbReference type="Pfam" id="PF01835">
    <property type="entry name" value="MG2"/>
    <property type="match status" value="1"/>
</dbReference>
<dbReference type="Pfam" id="PF17791">
    <property type="entry name" value="MG3"/>
    <property type="match status" value="1"/>
</dbReference>
<dbReference type="Pfam" id="PF17789">
    <property type="entry name" value="MG4"/>
    <property type="match status" value="1"/>
</dbReference>
<dbReference type="Pfam" id="PF01759">
    <property type="entry name" value="NTR"/>
    <property type="match status" value="1"/>
</dbReference>
<dbReference type="Pfam" id="PF07678">
    <property type="entry name" value="TED_complement"/>
    <property type="match status" value="1"/>
</dbReference>
<dbReference type="PRINTS" id="PR00004">
    <property type="entry name" value="ANAPHYLATOXN"/>
</dbReference>
<dbReference type="SFLD" id="SFLDG01179">
    <property type="entry name" value="Complement_C3/C4_Like"/>
    <property type="match status" value="1"/>
</dbReference>
<dbReference type="SMART" id="SM01360">
    <property type="entry name" value="A2M"/>
    <property type="match status" value="1"/>
</dbReference>
<dbReference type="SMART" id="SM01359">
    <property type="entry name" value="A2M_N_2"/>
    <property type="match status" value="1"/>
</dbReference>
<dbReference type="SMART" id="SM01361">
    <property type="entry name" value="A2M_recep"/>
    <property type="match status" value="1"/>
</dbReference>
<dbReference type="SMART" id="SM00104">
    <property type="entry name" value="ANATO"/>
    <property type="match status" value="1"/>
</dbReference>
<dbReference type="SMART" id="SM00643">
    <property type="entry name" value="C345C"/>
    <property type="match status" value="1"/>
</dbReference>
<dbReference type="SMART" id="SM01419">
    <property type="entry name" value="Thiol-ester_cl"/>
    <property type="match status" value="1"/>
</dbReference>
<dbReference type="SUPFAM" id="SSF49410">
    <property type="entry name" value="Alpha-macroglobulin receptor domain"/>
    <property type="match status" value="1"/>
</dbReference>
<dbReference type="SUPFAM" id="SSF47686">
    <property type="entry name" value="Anaphylotoxins (complement system)"/>
    <property type="match status" value="1"/>
</dbReference>
<dbReference type="SUPFAM" id="SSF48239">
    <property type="entry name" value="Terpenoid cyclases/Protein prenyltransferases"/>
    <property type="match status" value="1"/>
</dbReference>
<dbReference type="SUPFAM" id="SSF50242">
    <property type="entry name" value="TIMP-like"/>
    <property type="match status" value="1"/>
</dbReference>
<dbReference type="PROSITE" id="PS00477">
    <property type="entry name" value="ALPHA_2_MACROGLOBULIN"/>
    <property type="match status" value="1"/>
</dbReference>
<dbReference type="PROSITE" id="PS01177">
    <property type="entry name" value="ANAPHYLATOXIN_1"/>
    <property type="match status" value="1"/>
</dbReference>
<dbReference type="PROSITE" id="PS01178">
    <property type="entry name" value="ANAPHYLATOXIN_2"/>
    <property type="match status" value="1"/>
</dbReference>
<dbReference type="PROSITE" id="PS50189">
    <property type="entry name" value="NTR"/>
    <property type="match status" value="1"/>
</dbReference>
<protein>
    <recommendedName>
        <fullName>Complement C4-B</fullName>
    </recommendedName>
    <alternativeName>
        <fullName>Basic complement C4</fullName>
    </alternativeName>
    <alternativeName>
        <fullName>C3 and PZP-like alpha-2-macroglobulin domain-containing protein 3</fullName>
    </alternativeName>
    <component>
        <recommendedName>
            <fullName>Complement C4 beta chain</fullName>
        </recommendedName>
    </component>
    <component>
        <recommendedName>
            <fullName>Complement C4-B alpha chain</fullName>
        </recommendedName>
    </component>
    <component>
        <recommendedName>
            <fullName>C4a anaphylatoxin</fullName>
        </recommendedName>
    </component>
    <component>
        <recommendedName>
            <fullName>Complement C4b-B</fullName>
        </recommendedName>
    </component>
    <component>
        <recommendedName>
            <fullName>C4d-B</fullName>
        </recommendedName>
    </component>
    <component>
        <recommendedName>
            <fullName>Complement C4 gamma chain</fullName>
        </recommendedName>
    </component>
</protein>
<feature type="signal peptide" evidence="1">
    <location>
        <begin position="1"/>
        <end position="19"/>
    </location>
</feature>
<feature type="chain" id="PRO_0000042699" description="Complement C4 beta chain">
    <location>
        <begin position="20"/>
        <end position="675"/>
    </location>
</feature>
<feature type="propeptide" id="PRO_0000042700" evidence="19">
    <location>
        <begin position="676"/>
        <end position="679"/>
    </location>
</feature>
<feature type="chain" id="PRO_0000042701" description="Complement C4-B alpha chain">
    <location>
        <begin position="680"/>
        <end position="1446"/>
    </location>
</feature>
<feature type="chain" id="PRO_0000042702" description="C4a anaphylatoxin">
    <location>
        <begin position="680"/>
        <end position="756"/>
    </location>
</feature>
<feature type="chain" id="PRO_0000042703" description="Complement C4b-B">
    <location>
        <begin position="757"/>
        <end position="1446"/>
    </location>
</feature>
<feature type="chain" id="PRO_0000042704" description="C4d-B">
    <location>
        <begin position="957"/>
        <end position="1336"/>
    </location>
</feature>
<feature type="propeptide" id="PRO_0000042705">
    <location>
        <begin position="1447"/>
        <end position="1453"/>
    </location>
</feature>
<feature type="chain" id="PRO_0000042706" description="Complement C4 gamma chain">
    <location>
        <begin position="1454"/>
        <end position="1744"/>
    </location>
</feature>
<feature type="domain" description="Anaphylatoxin-like" evidence="3">
    <location>
        <begin position="702"/>
        <end position="736"/>
    </location>
</feature>
<feature type="domain" description="NTR" evidence="4">
    <location>
        <begin position="1595"/>
        <end position="1742"/>
    </location>
</feature>
<feature type="site" description="Cleavage; by C1S, MASP2 and GZMK" evidence="1">
    <location>
        <begin position="756"/>
        <end position="757"/>
    </location>
</feature>
<feature type="site" description="Responsible for effective binding to form amide bonds with immune aggregates or protein antigens" evidence="22">
    <location>
        <position position="1125"/>
    </location>
</feature>
<feature type="modified residue" description="Phosphoserine" evidence="1">
    <location>
        <position position="918"/>
    </location>
</feature>
<feature type="modified residue" description="Sulfotyrosine" evidence="18">
    <location>
        <position position="1417"/>
    </location>
</feature>
<feature type="modified residue" description="Sulfotyrosine" evidence="18">
    <location>
        <position position="1420"/>
    </location>
</feature>
<feature type="modified residue" description="Sulfotyrosine" evidence="18">
    <location>
        <position position="1422"/>
    </location>
</feature>
<feature type="glycosylation site" description="N-linked (GlcNAc...) asparagine" evidence="7">
    <location>
        <position position="226"/>
    </location>
</feature>
<feature type="glycosylation site" description="N-linked (GlcNAc...) asparagine" evidence="2">
    <location>
        <position position="862"/>
    </location>
</feature>
<feature type="glycosylation site" description="N-linked (GlcNAc...) asparagine" evidence="11">
    <location>
        <position position="1328"/>
    </location>
</feature>
<feature type="glycosylation site" description="N-linked (GlcNAc...) asparagine" evidence="9">
    <location>
        <position position="1391"/>
    </location>
</feature>
<feature type="disulfide bond" evidence="1">
    <location>
        <begin position="68"/>
        <end position="97"/>
    </location>
</feature>
<feature type="disulfide bond" description="Interchain (with C-820)" evidence="1">
    <location>
        <position position="567"/>
    </location>
</feature>
<feature type="disulfide bond" evidence="1">
    <location>
        <begin position="635"/>
        <end position="669"/>
    </location>
</feature>
<feature type="disulfide bond" evidence="1">
    <location>
        <begin position="702"/>
        <end position="728"/>
    </location>
</feature>
<feature type="disulfide bond" evidence="1">
    <location>
        <begin position="703"/>
        <end position="735"/>
    </location>
</feature>
<feature type="disulfide bond" evidence="1">
    <location>
        <begin position="716"/>
        <end position="736"/>
    </location>
</feature>
<feature type="disulfide bond" description="Interchain (with C-567)" evidence="1">
    <location>
        <position position="820"/>
    </location>
</feature>
<feature type="disulfide bond" description="Interchain (with C-1590)" evidence="1">
    <location>
        <position position="876"/>
    </location>
</feature>
<feature type="disulfide bond" description="Interchain (with C-1566)" evidence="1">
    <location>
        <position position="1394"/>
    </location>
</feature>
<feature type="disulfide bond" evidence="1">
    <location>
        <begin position="1471"/>
        <end position="1535"/>
    </location>
</feature>
<feature type="disulfide bond" description="Interchain (with C-1394)" evidence="1">
    <location>
        <position position="1566"/>
    </location>
</feature>
<feature type="disulfide bond" evidence="1">
    <location>
        <begin position="1583"/>
        <end position="1588"/>
    </location>
</feature>
<feature type="disulfide bond" description="Interchain (with C-876)" evidence="1">
    <location>
        <position position="1590"/>
    </location>
</feature>
<feature type="disulfide bond" evidence="1">
    <location>
        <begin position="1595"/>
        <end position="1673"/>
    </location>
</feature>
<feature type="disulfide bond" evidence="1">
    <location>
        <begin position="1618"/>
        <end position="1742"/>
    </location>
</feature>
<feature type="disulfide bond" evidence="1">
    <location>
        <begin position="1718"/>
        <end position="1727"/>
    </location>
</feature>
<feature type="cross-link" description="Isoglutamyl cysteine thioester (Cys-Gln)">
    <location>
        <begin position="1010"/>
        <end position="1013"/>
    </location>
</feature>
<feature type="sequence variant" id="VAR_023729" description="In allotype C4B-long; dbSNP:rs139889867." evidence="8 24">
    <original>S</original>
    <variation>Y</variation>
    <location>
        <position position="347"/>
    </location>
</feature>
<feature type="sequence variant" id="VAR_069160" description="In allotype C4B1-hi.">
    <original>P</original>
    <variation>L</variation>
    <location>
        <position position="478"/>
    </location>
</feature>
<feature type="sequence variant" id="VAR_023730" description="In allotype C4B-long and allotype C4B2; dbSNP:rs796750528." evidence="8 24 25">
    <original>T</original>
    <variation>A</variation>
    <location>
        <position position="907"/>
    </location>
</feature>
<feature type="sequence variant" id="VAR_023731" description="In allotype C4B2 and allotype C4B5-Rg1; dbSNP:rs2258218." evidence="20 25">
    <original>G</original>
    <variation>D</variation>
    <location>
        <position position="1073"/>
    </location>
</feature>
<feature type="sequence variant" id="VAR_023732" description="In allotype C4B1a; dbSNP:rs2746414." evidence="10">
    <original>S</original>
    <variation>N</variation>
    <location>
        <position position="1176"/>
    </location>
</feature>
<feature type="sequence variant" id="VAR_023734" description="In allotype C4B5-Rg1; dbSNP:rs2229403." evidence="10">
    <original>A</original>
    <variation>V</variation>
    <location>
        <position position="1207"/>
    </location>
</feature>
<feature type="sequence variant" id="VAR_023735" description="In allotype C4B5-Rg1; dbSNP:rs2229409." evidence="10">
    <original>R</original>
    <variation>L</variation>
    <location>
        <position position="1210"/>
    </location>
</feature>
<feature type="sequence variant" id="VAR_069161" description="In allotype C4B1-SC01; dbSNP:rs2023616." evidence="23">
    <original>I</original>
    <variation>F</variation>
    <location>
        <position position="1317"/>
    </location>
</feature>
<feature type="mutagenesis site" description="No effect on hemolytic activity, nor on C1-dependent binding to IgG." evidence="13">
    <original>L</original>
    <variation>P</variation>
    <location>
        <position position="1120"/>
    </location>
</feature>
<feature type="mutagenesis site" description="30-40% decrease in hemolytic activity and C1-dependent binding to IgG." evidence="13">
    <original>S</original>
    <variation>C</variation>
    <location>
        <position position="1121"/>
    </location>
</feature>
<feature type="mutagenesis site" description="50-60% decrease in hemolytic activity and C1-dependent binding to IgG." evidence="13">
    <original>I</original>
    <variation>A</variation>
    <location>
        <position position="1124"/>
    </location>
</feature>
<feature type="mutagenesis site" description="20% decrease in hemolytic activity, 2-fold increase in C1-dependent binding to IgG." evidence="13">
    <original>H</original>
    <variation>A</variation>
    <location>
        <position position="1125"/>
    </location>
</feature>
<feature type="mutagenesis site" description="2.5-3 fold-decrease in hemolytic activity, 3-fold increase in C1-dependent binding to IgG." evidence="13">
    <original>H</original>
    <variation>D</variation>
    <location>
        <position position="1125"/>
    </location>
</feature>
<feature type="sequence conflict" description="In Ref. 3; AAR89101." evidence="27" ref="3">
    <original>R</original>
    <variation>S</variation>
    <location>
        <position position="714"/>
    </location>
</feature>
<feature type="sequence conflict" description="In Ref. 3; AAR89127." evidence="27" ref="3">
    <original>R</original>
    <variation>Q</variation>
    <location>
        <position position="729"/>
    </location>
</feature>
<feature type="sequence conflict" description="In Ref. 1; AAA99717." evidence="27" ref="1">
    <original>VT</original>
    <variation>LQ</variation>
    <location>
        <begin position="980"/>
        <end position="981"/>
    </location>
</feature>
<feature type="sequence conflict" description="In Ref. 8; AA sequence, 9; AA sequence and 10; AA sequence." evidence="27" ref="8 9 10">
    <original>Q</original>
    <variation>E</variation>
    <location>
        <position position="1013"/>
    </location>
</feature>
<feature type="sequence conflict" description="In Ref. 9; AA sequence." evidence="27" ref="9">
    <original>SQ</original>
    <variation>IA</variation>
    <location>
        <begin position="1109"/>
        <end position="1110"/>
    </location>
</feature>
<feature type="sequence conflict" description="In Ref. 9; AA sequence and 13; AA sequence." evidence="27" ref="9 13">
    <original>H</original>
    <variation>V</variation>
    <location>
        <position position="1271"/>
    </location>
</feature>
<feature type="sequence conflict" description="In Ref. 9; AA sequence and 13; AA sequence." evidence="27" ref="9 13">
    <original>R</original>
    <variation>V</variation>
    <location>
        <position position="1300"/>
    </location>
</feature>
<feature type="sequence conflict" description="In Ref. 1; AAA99717." evidence="27" ref="1">
    <original>T</original>
    <variation>RA</variation>
    <location>
        <position position="1654"/>
    </location>
</feature>
<feature type="sequence conflict" description="In Ref. 1; AAA99717." evidence="27" ref="1">
    <original>H</original>
    <variation>Q</variation>
    <location>
        <position position="1698"/>
    </location>
</feature>
<feature type="strand" evidence="31">
    <location>
        <begin position="22"/>
        <end position="32"/>
    </location>
</feature>
<feature type="strand" evidence="31">
    <location>
        <begin position="37"/>
        <end position="45"/>
    </location>
</feature>
<feature type="strand" evidence="31">
    <location>
        <begin position="52"/>
        <end position="60"/>
    </location>
</feature>
<feature type="strand" evidence="31">
    <location>
        <begin position="66"/>
        <end position="69"/>
    </location>
</feature>
<feature type="strand" evidence="31">
    <location>
        <begin position="72"/>
        <end position="76"/>
    </location>
</feature>
<feature type="strand" evidence="31">
    <location>
        <begin position="78"/>
        <end position="80"/>
    </location>
</feature>
<feature type="strand" evidence="31">
    <location>
        <begin position="82"/>
        <end position="87"/>
    </location>
</feature>
<feature type="helix" evidence="31">
    <location>
        <begin position="91"/>
        <end position="97"/>
    </location>
</feature>
<feature type="strand" evidence="31">
    <location>
        <begin position="107"/>
        <end position="113"/>
    </location>
</feature>
<feature type="turn" evidence="31">
    <location>
        <begin position="115"/>
        <end position="120"/>
    </location>
</feature>
<feature type="strand" evidence="31">
    <location>
        <begin position="126"/>
        <end position="135"/>
    </location>
</feature>
<feature type="strand" evidence="31">
    <location>
        <begin position="139"/>
        <end position="146"/>
    </location>
</feature>
<feature type="strand" evidence="31">
    <location>
        <begin position="148"/>
        <end position="150"/>
    </location>
</feature>
<feature type="strand" evidence="31">
    <location>
        <begin position="155"/>
        <end position="163"/>
    </location>
</feature>
<feature type="strand" evidence="31">
    <location>
        <begin position="167"/>
        <end position="169"/>
    </location>
</feature>
<feature type="strand" evidence="31">
    <location>
        <begin position="174"/>
        <end position="179"/>
    </location>
</feature>
<feature type="strand" evidence="31">
    <location>
        <begin position="181"/>
        <end position="183"/>
    </location>
</feature>
<feature type="strand" evidence="31">
    <location>
        <begin position="185"/>
        <end position="191"/>
    </location>
</feature>
<feature type="strand" evidence="31">
    <location>
        <begin position="194"/>
        <end position="203"/>
    </location>
</feature>
<feature type="strand" evidence="31">
    <location>
        <begin position="210"/>
        <end position="221"/>
    </location>
</feature>
<feature type="strand" evidence="31">
    <location>
        <begin position="228"/>
        <end position="233"/>
    </location>
</feature>
<feature type="strand" evidence="31">
    <location>
        <begin position="240"/>
        <end position="250"/>
    </location>
</feature>
<feature type="strand" evidence="31">
    <location>
        <begin position="252"/>
        <end position="254"/>
    </location>
</feature>
<feature type="strand" evidence="31">
    <location>
        <begin position="262"/>
        <end position="270"/>
    </location>
</feature>
<feature type="strand" evidence="31">
    <location>
        <begin position="278"/>
        <end position="287"/>
    </location>
</feature>
<feature type="strand" evidence="31">
    <location>
        <begin position="293"/>
        <end position="295"/>
    </location>
</feature>
<feature type="strand" evidence="31">
    <location>
        <begin position="301"/>
        <end position="304"/>
    </location>
</feature>
<feature type="strand" evidence="31">
    <location>
        <begin position="309"/>
        <end position="314"/>
    </location>
</feature>
<feature type="helix" evidence="31">
    <location>
        <begin position="316"/>
        <end position="325"/>
    </location>
</feature>
<feature type="helix" evidence="31">
    <location>
        <begin position="330"/>
        <end position="332"/>
    </location>
</feature>
<feature type="strand" evidence="31">
    <location>
        <begin position="337"/>
        <end position="346"/>
    </location>
</feature>
<feature type="turn" evidence="31">
    <location>
        <begin position="347"/>
        <end position="349"/>
    </location>
</feature>
<feature type="strand" evidence="31">
    <location>
        <begin position="352"/>
        <end position="357"/>
    </location>
</feature>
<feature type="strand" evidence="31">
    <location>
        <begin position="361"/>
        <end position="364"/>
    </location>
</feature>
<feature type="strand" evidence="31">
    <location>
        <begin position="366"/>
        <end position="370"/>
    </location>
</feature>
<feature type="strand" evidence="31">
    <location>
        <begin position="384"/>
        <end position="392"/>
    </location>
</feature>
<feature type="strand" evidence="31">
    <location>
        <begin position="402"/>
        <end position="409"/>
    </location>
</feature>
<feature type="strand" evidence="31">
    <location>
        <begin position="412"/>
        <end position="414"/>
    </location>
</feature>
<feature type="strand" evidence="31">
    <location>
        <begin position="417"/>
        <end position="424"/>
    </location>
</feature>
<feature type="strand" evidence="31">
    <location>
        <begin position="430"/>
        <end position="435"/>
    </location>
</feature>
<feature type="strand" evidence="31">
    <location>
        <begin position="443"/>
        <end position="450"/>
    </location>
</feature>
<feature type="strand" evidence="31">
    <location>
        <begin position="452"/>
        <end position="454"/>
    </location>
</feature>
<feature type="strand" evidence="31">
    <location>
        <begin position="456"/>
        <end position="463"/>
    </location>
</feature>
<feature type="strand" evidence="31">
    <location>
        <begin position="472"/>
        <end position="476"/>
    </location>
</feature>
<feature type="strand" evidence="31">
    <location>
        <begin position="488"/>
        <end position="498"/>
    </location>
</feature>
<feature type="strand" evidence="31">
    <location>
        <begin position="504"/>
        <end position="511"/>
    </location>
</feature>
<feature type="strand" evidence="31">
    <location>
        <begin position="514"/>
        <end position="522"/>
    </location>
</feature>
<feature type="strand" evidence="31">
    <location>
        <begin position="525"/>
        <end position="532"/>
    </location>
</feature>
<feature type="helix" evidence="31">
    <location>
        <begin position="535"/>
        <end position="537"/>
    </location>
</feature>
<feature type="strand" evidence="31">
    <location>
        <begin position="539"/>
        <end position="549"/>
    </location>
</feature>
<feature type="strand" evidence="31">
    <location>
        <begin position="552"/>
        <end position="561"/>
    </location>
</feature>
<feature type="strand" evidence="31">
    <location>
        <begin position="571"/>
        <end position="574"/>
    </location>
</feature>
<feature type="strand" evidence="31">
    <location>
        <begin position="586"/>
        <end position="605"/>
    </location>
</feature>
<feature type="helix" evidence="31">
    <location>
        <begin position="608"/>
        <end position="611"/>
    </location>
</feature>
<feature type="helix" evidence="31">
    <location>
        <begin position="622"/>
        <end position="628"/>
    </location>
</feature>
<feature type="helix" evidence="31">
    <location>
        <begin position="629"/>
        <end position="631"/>
    </location>
</feature>
<feature type="strand" evidence="31">
    <location>
        <begin position="641"/>
        <end position="643"/>
    </location>
</feature>
<feature type="helix" evidence="31">
    <location>
        <begin position="644"/>
        <end position="650"/>
    </location>
</feature>
<feature type="strand" evidence="31">
    <location>
        <begin position="652"/>
        <end position="655"/>
    </location>
</feature>
<feature type="strand" evidence="31">
    <location>
        <begin position="1465"/>
        <end position="1474"/>
    </location>
</feature>
<feature type="strand" evidence="31">
    <location>
        <begin position="1484"/>
        <end position="1489"/>
    </location>
</feature>
<feature type="strand" evidence="31">
    <location>
        <begin position="1494"/>
        <end position="1496"/>
    </location>
</feature>
<feature type="helix" evidence="31">
    <location>
        <begin position="1498"/>
        <end position="1501"/>
    </location>
</feature>
<feature type="helix" evidence="31">
    <location>
        <begin position="1502"/>
        <end position="1504"/>
    </location>
</feature>
<feature type="strand" evidence="31">
    <location>
        <begin position="1506"/>
        <end position="1509"/>
    </location>
</feature>
<feature type="strand" evidence="31">
    <location>
        <begin position="1512"/>
        <end position="1517"/>
    </location>
</feature>
<feature type="strand" evidence="31">
    <location>
        <begin position="1519"/>
        <end position="1527"/>
    </location>
</feature>
<feature type="strand" evidence="31">
    <location>
        <begin position="1534"/>
        <end position="1536"/>
    </location>
</feature>
<feature type="strand" evidence="31">
    <location>
        <begin position="1539"/>
        <end position="1544"/>
    </location>
</feature>
<feature type="strand" evidence="31">
    <location>
        <begin position="1554"/>
        <end position="1560"/>
    </location>
</feature>
<feature type="strand" evidence="31">
    <location>
        <begin position="1564"/>
        <end position="1567"/>
    </location>
</feature>
<feature type="strand" evidence="31">
    <location>
        <begin position="1573"/>
        <end position="1575"/>
    </location>
</feature>
<feature type="strand" evidence="31">
    <location>
        <begin position="1581"/>
        <end position="1584"/>
    </location>
</feature>
<feature type="strand" evidence="31">
    <location>
        <begin position="1587"/>
        <end position="1590"/>
    </location>
</feature>
<feature type="helix" evidence="31">
    <location>
        <begin position="1613"/>
        <end position="1618"/>
    </location>
</feature>
<feature type="strand" evidence="31">
    <location>
        <begin position="1625"/>
        <end position="1634"/>
    </location>
</feature>
<feature type="strand" evidence="31">
    <location>
        <begin position="1640"/>
        <end position="1652"/>
    </location>
</feature>
<feature type="strand" evidence="31">
    <location>
        <begin position="1664"/>
        <end position="1670"/>
    </location>
</feature>
<feature type="strand" evidence="31">
    <location>
        <begin position="1681"/>
        <end position="1687"/>
    </location>
</feature>
<feature type="strand" evidence="31">
    <location>
        <begin position="1695"/>
        <end position="1699"/>
    </location>
</feature>
<feature type="strand" evidence="31">
    <location>
        <begin position="1708"/>
        <end position="1711"/>
    </location>
</feature>
<feature type="helix" evidence="31">
    <location>
        <begin position="1715"/>
        <end position="1718"/>
    </location>
</feature>
<feature type="helix" evidence="31">
    <location>
        <begin position="1724"/>
        <end position="1739"/>
    </location>
</feature>
<reference key="1">
    <citation type="journal article" date="1996" name="Immunogenetics">
        <title>Complete sequence of the complement C4 gene from the HLA-A1, B8, C4AQ0, C4B1, DR3 haplotype.</title>
        <authorList>
            <person name="Ulgiati D."/>
            <person name="Townend D.C."/>
            <person name="Christiansen F.T."/>
            <person name="Dawkins R.L."/>
            <person name="Abraham L.J."/>
        </authorList>
    </citation>
    <scope>NUCLEOTIDE SEQUENCE [GENOMIC DNA]</scope>
    <scope>VARIANT PHE-1317</scope>
    <source>
        <tissue>Blood</tissue>
    </source>
</reference>
<reference key="2">
    <citation type="submission" date="1999-10" db="EMBL/GenBank/DDBJ databases">
        <title>Sequence determination of 300 kilobases of the human class III MHC locus.</title>
        <authorList>
            <person name="Rowen L."/>
            <person name="Dankers C."/>
            <person name="Baskin D."/>
            <person name="Faust J."/>
            <person name="Loretz C."/>
            <person name="Ahearn M.E."/>
            <person name="Banta A."/>
            <person name="Swartzell S."/>
            <person name="Smith T.M."/>
            <person name="Spies T."/>
            <person name="Hood L."/>
        </authorList>
    </citation>
    <scope>NUCLEOTIDE SEQUENCE [GENOMIC DNA]</scope>
    <scope>VARIANTS TYR-347 AND ALA-907</scope>
</reference>
<reference key="3">
    <citation type="submission" date="2003-09" db="EMBL/GenBank/DDBJ databases">
        <title>Molecular genetics of complement C4: implications for MHC evolution and disease susceptibility gene mapping.</title>
        <authorList>
            <person name="Sayer D."/>
            <person name="Puschendorf M."/>
            <person name="Wetherall J."/>
        </authorList>
    </citation>
    <scope>NUCLEOTIDE SEQUENCE [GENOMIC DNA]</scope>
    <scope>VARIANTS ALA-907 AND ASP-1073</scope>
</reference>
<reference key="4">
    <citation type="journal article" date="2003" name="Nature">
        <title>The DNA sequence and analysis of human chromosome 6.</title>
        <authorList>
            <person name="Mungall A.J."/>
            <person name="Palmer S.A."/>
            <person name="Sims S.K."/>
            <person name="Edwards C.A."/>
            <person name="Ashurst J.L."/>
            <person name="Wilming L."/>
            <person name="Jones M.C."/>
            <person name="Horton R."/>
            <person name="Hunt S.E."/>
            <person name="Scott C.E."/>
            <person name="Gilbert J.G.R."/>
            <person name="Clamp M.E."/>
            <person name="Bethel G."/>
            <person name="Milne S."/>
            <person name="Ainscough R."/>
            <person name="Almeida J.P."/>
            <person name="Ambrose K.D."/>
            <person name="Andrews T.D."/>
            <person name="Ashwell R.I.S."/>
            <person name="Babbage A.K."/>
            <person name="Bagguley C.L."/>
            <person name="Bailey J."/>
            <person name="Banerjee R."/>
            <person name="Barker D.J."/>
            <person name="Barlow K.F."/>
            <person name="Bates K."/>
            <person name="Beare D.M."/>
            <person name="Beasley H."/>
            <person name="Beasley O."/>
            <person name="Bird C.P."/>
            <person name="Blakey S.E."/>
            <person name="Bray-Allen S."/>
            <person name="Brook J."/>
            <person name="Brown A.J."/>
            <person name="Brown J.Y."/>
            <person name="Burford D.C."/>
            <person name="Burrill W."/>
            <person name="Burton J."/>
            <person name="Carder C."/>
            <person name="Carter N.P."/>
            <person name="Chapman J.C."/>
            <person name="Clark S.Y."/>
            <person name="Clark G."/>
            <person name="Clee C.M."/>
            <person name="Clegg S."/>
            <person name="Cobley V."/>
            <person name="Collier R.E."/>
            <person name="Collins J.E."/>
            <person name="Colman L.K."/>
            <person name="Corby N.R."/>
            <person name="Coville G.J."/>
            <person name="Culley K.M."/>
            <person name="Dhami P."/>
            <person name="Davies J."/>
            <person name="Dunn M."/>
            <person name="Earthrowl M.E."/>
            <person name="Ellington A.E."/>
            <person name="Evans K.A."/>
            <person name="Faulkner L."/>
            <person name="Francis M.D."/>
            <person name="Frankish A."/>
            <person name="Frankland J."/>
            <person name="French L."/>
            <person name="Garner P."/>
            <person name="Garnett J."/>
            <person name="Ghori M.J."/>
            <person name="Gilby L.M."/>
            <person name="Gillson C.J."/>
            <person name="Glithero R.J."/>
            <person name="Grafham D.V."/>
            <person name="Grant M."/>
            <person name="Gribble S."/>
            <person name="Griffiths C."/>
            <person name="Griffiths M.N.D."/>
            <person name="Hall R."/>
            <person name="Halls K.S."/>
            <person name="Hammond S."/>
            <person name="Harley J.L."/>
            <person name="Hart E.A."/>
            <person name="Heath P.D."/>
            <person name="Heathcott R."/>
            <person name="Holmes S.J."/>
            <person name="Howden P.J."/>
            <person name="Howe K.L."/>
            <person name="Howell G.R."/>
            <person name="Huckle E."/>
            <person name="Humphray S.J."/>
            <person name="Humphries M.D."/>
            <person name="Hunt A.R."/>
            <person name="Johnson C.M."/>
            <person name="Joy A.A."/>
            <person name="Kay M."/>
            <person name="Keenan S.J."/>
            <person name="Kimberley A.M."/>
            <person name="King A."/>
            <person name="Laird G.K."/>
            <person name="Langford C."/>
            <person name="Lawlor S."/>
            <person name="Leongamornlert D.A."/>
            <person name="Leversha M."/>
            <person name="Lloyd C.R."/>
            <person name="Lloyd D.M."/>
            <person name="Loveland J.E."/>
            <person name="Lovell J."/>
            <person name="Martin S."/>
            <person name="Mashreghi-Mohammadi M."/>
            <person name="Maslen G.L."/>
            <person name="Matthews L."/>
            <person name="McCann O.T."/>
            <person name="McLaren S.J."/>
            <person name="McLay K."/>
            <person name="McMurray A."/>
            <person name="Moore M.J.F."/>
            <person name="Mullikin J.C."/>
            <person name="Niblett D."/>
            <person name="Nickerson T."/>
            <person name="Novik K.L."/>
            <person name="Oliver K."/>
            <person name="Overton-Larty E.K."/>
            <person name="Parker A."/>
            <person name="Patel R."/>
            <person name="Pearce A.V."/>
            <person name="Peck A.I."/>
            <person name="Phillimore B.J.C.T."/>
            <person name="Phillips S."/>
            <person name="Plumb R.W."/>
            <person name="Porter K.M."/>
            <person name="Ramsey Y."/>
            <person name="Ranby S.A."/>
            <person name="Rice C.M."/>
            <person name="Ross M.T."/>
            <person name="Searle S.M."/>
            <person name="Sehra H.K."/>
            <person name="Sheridan E."/>
            <person name="Skuce C.D."/>
            <person name="Smith S."/>
            <person name="Smith M."/>
            <person name="Spraggon L."/>
            <person name="Squares S.L."/>
            <person name="Steward C.A."/>
            <person name="Sycamore N."/>
            <person name="Tamlyn-Hall G."/>
            <person name="Tester J."/>
            <person name="Theaker A.J."/>
            <person name="Thomas D.W."/>
            <person name="Thorpe A."/>
            <person name="Tracey A."/>
            <person name="Tromans A."/>
            <person name="Tubby B."/>
            <person name="Wall M."/>
            <person name="Wallis J.M."/>
            <person name="West A.P."/>
            <person name="White S.S."/>
            <person name="Whitehead S.L."/>
            <person name="Whittaker H."/>
            <person name="Wild A."/>
            <person name="Willey D.J."/>
            <person name="Wilmer T.E."/>
            <person name="Wood J.M."/>
            <person name="Wray P.W."/>
            <person name="Wyatt J.C."/>
            <person name="Young L."/>
            <person name="Younger R.M."/>
            <person name="Bentley D.R."/>
            <person name="Coulson A."/>
            <person name="Durbin R.M."/>
            <person name="Hubbard T."/>
            <person name="Sulston J.E."/>
            <person name="Dunham I."/>
            <person name="Rogers J."/>
            <person name="Beck S."/>
        </authorList>
    </citation>
    <scope>NUCLEOTIDE SEQUENCE [LARGE SCALE GENOMIC DNA]</scope>
    <scope>VARIANTS TYR-347 AND ALA-907</scope>
</reference>
<reference key="5">
    <citation type="journal article" date="1981" name="J. Biol. Chem.">
        <title>Complete primary structure of human C4a anaphylatoxin.</title>
        <authorList>
            <person name="Moon K.E."/>
            <person name="Gorski J.P."/>
            <person name="Hugli T.E."/>
        </authorList>
    </citation>
    <scope>PROTEIN SEQUENCE OF 680-756</scope>
</reference>
<reference key="6">
    <citation type="journal article" date="1990" name="FEBS Lett.">
        <title>Importance of the alpha 3-fragment of complement C4 for the binding with C4b-binding protein.</title>
        <authorList>
            <person name="Hessing M."/>
            <person name="van 't Veer C."/>
            <person name="Hackeng T.M."/>
            <person name="Bouma B.N."/>
            <person name="Iwanaga S."/>
        </authorList>
    </citation>
    <scope>PROTEIN SEQUENCE OF 757-771 AND 980-990</scope>
</reference>
<reference key="7">
    <citation type="journal article" date="1984" name="Cell">
        <title>The structural basis of the multiple forms of human complement component C4.</title>
        <authorList>
            <person name="Belt K.T."/>
            <person name="Carroll M.C."/>
            <person name="Porter R.R."/>
        </authorList>
    </citation>
    <scope>NUCLEOTIDE SEQUENCE [MRNA] OF 956-1336</scope>
    <scope>VARIANT ASP-1073</scope>
    <source>
        <tissue>Liver</tissue>
    </source>
</reference>
<reference key="8">
    <citation type="journal article" date="1981" name="Biochem. J.">
        <title>Amino acid sequence around the thiol and reactive acyl groups of human complement component C4.</title>
        <authorList>
            <person name="Campbell R.D."/>
            <person name="Gagnon J."/>
            <person name="Porter R.R."/>
        </authorList>
    </citation>
    <scope>PROTEIN SEQUENCE OF 957-1044</scope>
</reference>
<reference key="9">
    <citation type="journal article" date="1987" name="Mol. Immunol.">
        <title>The chemical structure of the C4d fragment of the human complement component C4.</title>
        <authorList>
            <person name="Chakravarti D.N."/>
            <person name="Campbell R.D."/>
            <person name="Porter R.R."/>
        </authorList>
    </citation>
    <scope>PROTEIN SEQUENCE OF 957-1336</scope>
</reference>
<reference key="10">
    <citation type="journal article" date="1981" name="Proc. Natl. Acad. Sci. U.S.A.">
        <title>Sequence determination of the thiolester site of the fourth component of human complement.</title>
        <authorList>
            <person name="Harrison R.A."/>
            <person name="Thomas M.L."/>
            <person name="Tack B.F."/>
        </authorList>
    </citation>
    <scope>PROTEIN SEQUENCE OF 990-1037</scope>
</reference>
<reference key="11">
    <citation type="journal article" date="1998" name="J. Immunol.">
        <title>C4d DNA sequences of two infrequent human allotypes (C4A13 and C4B12) and the presence of signal sequences enhancing recombination.</title>
        <authorList>
            <person name="Martinez-Quiles N."/>
            <person name="Paz-Artal E."/>
            <person name="Moreno-Pelayo M.A."/>
            <person name="Longas J."/>
            <person name="Ferre-Lopez S."/>
            <person name="Rosal M."/>
            <person name="Arnaiz-Villena A."/>
        </authorList>
    </citation>
    <scope>NUCLEOTIDE SEQUENCE [GENOMIC DNA] OF 1055-1225 (ALLOTYPE C4B12)</scope>
</reference>
<reference key="12">
    <citation type="journal article" date="2004" name="Tissue Antigens">
        <title>C4d DNA sequence of complement C4B93 and recombination mechanisms for its generation.</title>
        <authorList>
            <person name="Lopez-Goyanes A."/>
            <person name="Moreno M.A."/>
            <person name="Ferre S."/>
            <person name="Paz-Artal E."/>
        </authorList>
    </citation>
    <scope>NUCLEOTIDE SEQUENCE [GENOMIC DNA] OF 1055-1225</scope>
    <scope>VARIANTS ASN-1176; VAL-1207 AND LEU-1210</scope>
</reference>
<reference key="13">
    <citation type="journal article" date="1983" name="FEBS Lett.">
        <title>Amino acid sequence of a polymorphic segment from fragment C4d of human complement component C4.</title>
        <authorList>
            <person name="Chakravarti D.N."/>
            <person name="Campbell R.D."/>
            <person name="Gagnon J."/>
        </authorList>
    </citation>
    <scope>PROTEIN SEQUENCE OF 1199-1304</scope>
</reference>
<reference key="14">
    <citation type="journal article" date="1986" name="J. Biol. Chem.">
        <title>Identification of the site of sulfation of the fourth component of human complement.</title>
        <authorList>
            <person name="Hortin G."/>
            <person name="Sims H."/>
            <person name="Strauss A.W."/>
        </authorList>
    </citation>
    <scope>PROTEIN SEQUENCE OF 1405-1431</scope>
    <scope>SULFATION AT TYR-1417; TYR-1420 AND TYR-1422</scope>
</reference>
<reference key="15">
    <citation type="journal article" date="1988" name="J. Rheumatol.">
        <title>Complete C4B deficiency in black Americans with systemic lupus erythematosus.</title>
        <authorList>
            <person name="Wilson W.A."/>
            <person name="Perez M.C."/>
        </authorList>
    </citation>
    <scope>INVOLVEMENT IN C4BD AND SLE</scope>
</reference>
<reference key="16">
    <citation type="journal article" date="1988" name="J. Exp. Med.">
        <title>Identification of distinct C3b and C4b recognition sites in the human C3b/C4b receptor (CR1, CD35) by deletion mutagenesis.</title>
        <authorList>
            <person name="Klickstein L.B."/>
            <person name="Bartow T.J."/>
            <person name="Miletic V."/>
            <person name="Rabson L.D."/>
            <person name="Smith J.A."/>
            <person name="Fearon D.T."/>
        </authorList>
    </citation>
    <scope>INTERACTION WITH CR1</scope>
</reference>
<reference key="17">
    <citation type="journal article" date="1990" name="Proc. Natl. Acad. Sci. U.S.A.">
        <title>Substitution of a single amino acid (aspartic acid for histidine) converts the functional activity of human complement C4B to C4A.</title>
        <authorList>
            <person name="Carroll M.C."/>
            <person name="Fathallah D.M."/>
            <person name="Bergamaschini L."/>
            <person name="Alicot E.M."/>
            <person name="Isenman D.E."/>
        </authorList>
    </citation>
    <scope>FUNCTION</scope>
    <scope>INVOLVEMENT OF HIS-1125 IN IMMUNOGLOBULIN-BINDING AND HEMOLYSIS</scope>
    <scope>MUTAGENESIS OF LEU-1120; SER-1121; ILE-1124 AND HIS-1125</scope>
</reference>
<reference key="18">
    <citation type="journal article" date="1994" name="J. Biol. Chem.">
        <title>Analysis of the functional domains of complement receptor type 1 (C3b/C4b receptor; CD35) by substitution mutagenesis.</title>
        <authorList>
            <person name="Krych M."/>
            <person name="Clemenza L."/>
            <person name="Howdeshell D."/>
            <person name="Hauhart R."/>
            <person name="Hourcade D."/>
            <person name="Atkinson J.P."/>
        </authorList>
    </citation>
    <scope>INTERACTION WITH CR1</scope>
</reference>
<reference key="19">
    <citation type="journal article" date="1996" name="Nature">
        <title>The reaction mechanism of the internal thioester in the human complement component C4.</title>
        <authorList>
            <person name="Dodds A.W."/>
            <person name="Ren X.D."/>
            <person name="Willis A.C."/>
            <person name="Law S.K."/>
        </authorList>
    </citation>
    <scope>FUNCTION (COMPLEMENT C4B-B)</scope>
    <scope>SUBCELLULAR LOCATION (COMPLEMENT C4B-B)</scope>
</reference>
<reference key="20">
    <citation type="journal article" date="1999" name="J. Immunol.">
        <title>Deficiency of human complement protein C4 due to identical frameshift mutations in the C4A and C4B genes.</title>
        <authorList>
            <person name="Lokki M.L."/>
            <person name="Circolo A."/>
            <person name="Ahokas P."/>
            <person name="Rupert K.L."/>
            <person name="Yu C.Y."/>
            <person name="Colten H.R."/>
        </authorList>
    </citation>
    <scope>INVOLVEMENT IN SLE</scope>
</reference>
<reference key="21">
    <citation type="journal article" date="2001" name="Int. Immunopharmacol.">
        <title>Genetic, structural and functional diversities of human complement components C4A and C4B and their mouse homologues, Slp and C4.</title>
        <authorList>
            <person name="Blanchong C.A."/>
            <person name="Chung E.K."/>
            <person name="Rupert K.L."/>
            <person name="Yang Y."/>
            <person name="Yang Z."/>
            <person name="Zhou B."/>
            <person name="Moulds J.M."/>
            <person name="Yu C.Y."/>
        </authorList>
    </citation>
    <scope>REVIEW</scope>
    <scope>DESCRIPTION OF ALLOTYPES</scope>
    <scope>TISSUE SPECIFICITY</scope>
</reference>
<reference key="22">
    <citation type="journal article" date="2003" name="Nat. Biotechnol.">
        <title>Identification and quantification of N-linked glycoproteins using hydrazide chemistry, stable isotope labeling and mass spectrometry.</title>
        <authorList>
            <person name="Zhang H."/>
            <person name="Li X.-J."/>
            <person name="Martin D.B."/>
            <person name="Aebersold R."/>
        </authorList>
    </citation>
    <scope>GLYCOSYLATION AT ASN-226</scope>
</reference>
<reference key="23">
    <citation type="journal article" date="2004" name="Proteomics">
        <title>Screening for N-glycosylated proteins by liquid chromatography mass spectrometry.</title>
        <authorList>
            <person name="Bunkenborg J."/>
            <person name="Pilch B.J."/>
            <person name="Podtelejnikov A.V."/>
            <person name="Wisniewski J.R."/>
        </authorList>
    </citation>
    <scope>GLYCOSYLATION [LARGE SCALE ANALYSIS] AT ASN-1391</scope>
    <source>
        <tissue>Plasma</tissue>
    </source>
</reference>
<reference key="24">
    <citation type="journal article" date="2006" name="J. Proteome Res.">
        <title>Identification of N-linked glycoproteins in human saliva by glycoprotein capture and mass spectrometry.</title>
        <authorList>
            <person name="Ramachandran P."/>
            <person name="Boontheung P."/>
            <person name="Xie Y."/>
            <person name="Sondej M."/>
            <person name="Wong D.T."/>
            <person name="Loo J.A."/>
        </authorList>
    </citation>
    <scope>GLYCOSYLATION [LARGE SCALE ANALYSIS] AT ASN-1328</scope>
    <source>
        <tissue>Saliva</tissue>
    </source>
</reference>
<reference key="25">
    <citation type="journal article" date="1986" name="EMBO J.">
        <title>Structural basis of the polymorphism of human complement components C4A and C4B: gene size, reactivity and antigenicity.</title>
        <authorList>
            <person name="Yu C.Y."/>
            <person name="Belt K.T."/>
            <person name="Giles C.M."/>
            <person name="Campbell R.D."/>
            <person name="Porter R.R."/>
        </authorList>
    </citation>
    <scope>STRUCTURAL BASIS OF POLYMORPHISM</scope>
</reference>
<reference key="26">
    <citation type="journal article" date="2007" name="Am. J. Hum. Genet.">
        <title>Gene copy-number variation and associated polymorphisms of complement component C4 in human systemic lupus erythematosus (SLE): low copy number is a risk factor for and high copy number is a protective factor against SLE susceptibility in European Americans.</title>
        <authorList>
            <person name="Yang Y."/>
            <person name="Chung E.K."/>
            <person name="Wu Y.L."/>
            <person name="Savelli S.L."/>
            <person name="Nagaraja H.N."/>
            <person name="Zhou B."/>
            <person name="Hebert M."/>
            <person name="Jones K.N."/>
            <person name="Shu Y."/>
            <person name="Kitzmiller K."/>
            <person name="Blanchong C.A."/>
            <person name="McBride K.L."/>
            <person name="Higgins G.C."/>
            <person name="Rennebohm R.M."/>
            <person name="Rice R.R."/>
            <person name="Hackshaw K.V."/>
            <person name="Roubey R.A."/>
            <person name="Grossman J.M."/>
            <person name="Tsao B.P."/>
            <person name="Birmingham D.J."/>
            <person name="Rovin B.H."/>
            <person name="Hebert L.A."/>
            <person name="Yu C.Y."/>
        </authorList>
    </citation>
    <scope>INVOLVEMENT IN SLE</scope>
</reference>
<reference key="27">
    <citation type="journal article" date="2016" name="Nature">
        <title>Schizophrenia risk from complex variation of complement component 4.</title>
        <authorList>
            <consortium name="Schizophrenia Working Group of the Psychiatric Genomics Consortium"/>
            <person name="Sekar A."/>
            <person name="Bialas A.R."/>
            <person name="de Rivera H."/>
            <person name="Davis A."/>
            <person name="Hammond T.R."/>
            <person name="Kamitaki N."/>
            <person name="Tooley K."/>
            <person name="Presumey J."/>
            <person name="Baum M."/>
            <person name="Van Doren V."/>
            <person name="Genovese G."/>
            <person name="Rose S.A."/>
            <person name="Handsaker R.E."/>
            <person name="Daly M.J."/>
            <person name="Carroll M.C."/>
            <person name="Stevens B."/>
            <person name="McCarroll S.A."/>
        </authorList>
    </citation>
    <scope>POLYMORPHISM</scope>
    <scope>TISSUE SPECIFICITY</scope>
    <scope>SUBCELLULAR LOCATION</scope>
</reference>
<reference key="28">
    <citation type="journal article" date="2017" name="Cell. Microbiol.">
        <title>Borrelia burgdorferi outer surface protein C (OspC) binds complement component C4b and confers bloodstream survival.</title>
        <authorList>
            <person name="Caine J.A."/>
            <person name="Lin Y.P."/>
            <person name="Kessler J.R."/>
            <person name="Sato H."/>
            <person name="Leong J.M."/>
            <person name="Coburn J."/>
        </authorList>
    </citation>
    <scope>INTERACTION WITH B.BURGDORFERI OSPC (MICROBIAL INFECTION)</scope>
</reference>
<reference key="29">
    <citation type="journal article" date="2021" name="Cell. Microbiol.">
        <title>Corrigendum.</title>
        <authorList>
            <person name="Caine J.A."/>
            <person name="Lin Y.P."/>
            <person name="Kessler J.R."/>
            <person name="Sato H."/>
            <person name="Leong J.M."/>
            <person name="Coburn J."/>
        </authorList>
    </citation>
    <scope>ERRATUM OF PUBMED:28873507</scope>
</reference>
<reference evidence="30" key="30">
    <citation type="journal article" date="2020" name="J. Immunol.">
        <title>An ultrahigh-affinity complement C4b-specific nanobody inhibits in vivo assembly of the classical pathway proconvertase.</title>
        <authorList>
            <person name="Zarantonello A."/>
            <person name="Presumey J."/>
            <person name="Simoni L."/>
            <person name="Yalcin E."/>
            <person name="Fox R."/>
            <person name="Hansen A."/>
            <person name="Olesen H.G."/>
            <person name="Thiel S."/>
            <person name="Johnson M.B."/>
            <person name="Stevens B."/>
            <person name="Laursen N.S."/>
            <person name="Carroll M.C."/>
            <person name="Andersen G.R."/>
        </authorList>
    </citation>
    <scope>X-RAY CRYSTALLOGRAPHY (3.30 ANGSTROMS) OF 20-675 AND 1454-1744</scope>
    <scope>DISULFIDE BONDS</scope>
</reference>